<proteinExistence type="evidence at protein level"/>
<name>PKD2_HUMAN</name>
<gene>
    <name evidence="60" type="primary">PKD2</name>
    <name type="synonym">TRPP1</name>
    <name evidence="50 60" type="synonym">TRPP2</name>
</gene>
<organism>
    <name type="scientific">Homo sapiens</name>
    <name type="common">Human</name>
    <dbReference type="NCBI Taxonomy" id="9606"/>
    <lineage>
        <taxon>Eukaryota</taxon>
        <taxon>Metazoa</taxon>
        <taxon>Chordata</taxon>
        <taxon>Craniata</taxon>
        <taxon>Vertebrata</taxon>
        <taxon>Euteleostomi</taxon>
        <taxon>Mammalia</taxon>
        <taxon>Eutheria</taxon>
        <taxon>Euarchontoglires</taxon>
        <taxon>Primates</taxon>
        <taxon>Haplorrhini</taxon>
        <taxon>Catarrhini</taxon>
        <taxon>Hominidae</taxon>
        <taxon>Homo</taxon>
    </lineage>
</organism>
<keyword id="KW-0002">3D-structure</keyword>
<keyword id="KW-0025">Alternative splicing</keyword>
<keyword id="KW-0106">Calcium</keyword>
<keyword id="KW-0107">Calcium channel</keyword>
<keyword id="KW-0109">Calcium transport</keyword>
<keyword id="KW-1003">Cell membrane</keyword>
<keyword id="KW-0966">Cell projection</keyword>
<keyword id="KW-1186">Ciliopathy</keyword>
<keyword id="KW-0969">Cilium</keyword>
<keyword id="KW-0175">Coiled coil</keyword>
<keyword id="KW-0968">Cytoplasmic vesicle</keyword>
<keyword id="KW-0903">Direct protein sequencing</keyword>
<keyword id="KW-0225">Disease variant</keyword>
<keyword id="KW-1015">Disulfide bond</keyword>
<keyword id="KW-0256">Endoplasmic reticulum</keyword>
<keyword id="KW-0325">Glycoprotein</keyword>
<keyword id="KW-0333">Golgi apparatus</keyword>
<keyword id="KW-0407">Ion channel</keyword>
<keyword id="KW-0406">Ion transport</keyword>
<keyword id="KW-0472">Membrane</keyword>
<keyword id="KW-0479">Metal-binding</keyword>
<keyword id="KW-0488">Methylation</keyword>
<keyword id="KW-0597">Phosphoprotein</keyword>
<keyword id="KW-0630">Potassium</keyword>
<keyword id="KW-0631">Potassium channel</keyword>
<keyword id="KW-0633">Potassium transport</keyword>
<keyword id="KW-1267">Proteomics identification</keyword>
<keyword id="KW-1185">Reference proteome</keyword>
<keyword id="KW-0964">Secreted</keyword>
<keyword id="KW-0812">Transmembrane</keyword>
<keyword id="KW-1133">Transmembrane helix</keyword>
<keyword id="KW-0813">Transport</keyword>
<keyword id="KW-0832">Ubl conjugation</keyword>
<keyword id="KW-0851">Voltage-gated channel</keyword>
<reference key="1">
    <citation type="journal article" date="1996" name="Science">
        <title>PKD2, a gene for polycystic kidney disease that encodes an integral membrane protein.</title>
        <authorList>
            <person name="Mochizuki T."/>
            <person name="Wu G."/>
            <person name="Hayashi T."/>
            <person name="Xenophontos S.L."/>
            <person name="Veldhuisen B."/>
            <person name="Saris J.J."/>
            <person name="Reynolds D.M."/>
            <person name="Cai Y."/>
            <person name="Gabow P.A."/>
            <person name="Pierides A."/>
            <person name="Kimberling W.J."/>
            <person name="Breuning M.H."/>
            <person name="Deltas C.C."/>
            <person name="Peters D.J.M."/>
            <person name="Somlo S."/>
        </authorList>
    </citation>
    <scope>NUCLEOTIDE SEQUENCE [MRNA] (ISOFORM 1)</scope>
    <scope>TISSUE SPECIFICITY</scope>
</reference>
<reference key="2">
    <citation type="journal article" date="1997" name="Genomics">
        <title>Characterization of the exon structure of the polycystic kidney disease 2 gene (PKD2).</title>
        <authorList>
            <person name="Hayashi T."/>
            <person name="Mochizuki T."/>
            <person name="Reynolds D.M."/>
            <person name="Wu G."/>
            <person name="Cai Y."/>
            <person name="Somlo S."/>
        </authorList>
    </citation>
    <scope>NUCLEOTIDE SEQUENCE [GENOMIC DNA]</scope>
</reference>
<reference key="3">
    <citation type="journal article" date="2004" name="Genome Res.">
        <title>The status, quality, and expansion of the NIH full-length cDNA project: the Mammalian Gene Collection (MGC).</title>
        <authorList>
            <consortium name="The MGC Project Team"/>
        </authorList>
    </citation>
    <scope>NUCLEOTIDE SEQUENCE [LARGE SCALE MRNA] (ISOFORM 1)</scope>
    <scope>VARIANT PRO-28</scope>
</reference>
<reference key="4">
    <citation type="journal article" date="1996" name="Genomics">
        <title>A gene similar to PKD1 maps to chromosome 4q22: a candidate gene for PKD2.</title>
        <authorList>
            <person name="Schneider M.C."/>
            <person name="Rodriguez A."/>
            <person name="Nomura H."/>
            <person name="Zhou J."/>
            <person name="Morton C.C."/>
            <person name="Reeders S.T."/>
            <person name="Weremowicz S."/>
        </authorList>
    </citation>
    <scope>NUCLEOTIDE SEQUENCE [MRNA] OF 361-968 (ISOFORM 1)</scope>
    <source>
        <tissue>Mammary gland</tissue>
    </source>
</reference>
<reference key="5">
    <citation type="journal article" date="2000" name="J. Am. Soc. Nephrol.">
        <title>Cellular and subcellular distribution of polycystin-2, the protein product of the PKD2 gene.</title>
        <authorList>
            <person name="Foggensteiner L."/>
            <person name="Bevan A.P."/>
            <person name="Thomas R."/>
            <person name="Coleman N."/>
            <person name="Boulter C."/>
            <person name="Bradley J."/>
            <person name="Ibraghimov-Beskrovnaya O."/>
            <person name="Klinger K."/>
            <person name="Sandford R."/>
        </authorList>
    </citation>
    <scope>TISSUE SPECIFICITY</scope>
    <scope>SUBCELLULAR LOCATION</scope>
</reference>
<reference key="6">
    <citation type="journal article" date="2000" name="J. Biol. Chem.">
        <title>In vivo interaction of the adapter protein CD2-associated protein with the type 2 polycystic kidney disease protein, polycystin-2.</title>
        <authorList>
            <person name="Lehtonen S."/>
            <person name="Ora A."/>
            <person name="Olkkonen V.M."/>
            <person name="Geng L."/>
            <person name="Zerial M."/>
            <person name="Somlo S."/>
            <person name="Lehtonen E."/>
        </authorList>
    </citation>
    <scope>INTERACTION WITH CD2AP</scope>
    <scope>SUBCELLULAR LOCATION</scope>
</reference>
<reference key="7">
    <citation type="journal article" date="2000" name="Proc. Natl. Acad. Sci. U.S.A.">
        <title>The polycystic kidney disease protein PKD2 interacts with Hax-1, a protein associated with the actin cytoskeleton.</title>
        <authorList>
            <person name="Gallagher A.R."/>
            <person name="Cedzich A."/>
            <person name="Gretz N."/>
            <person name="Somlo S."/>
            <person name="Witzgall R."/>
        </authorList>
    </citation>
    <scope>INTERACTION WITH HAX1</scope>
    <scope>SUBCELLULAR LOCATION</scope>
</reference>
<reference key="8">
    <citation type="journal article" date="2002" name="J. Biol. Chem.">
        <title>Voltage dependence and pH regulation of human polycystin-2-mediated cation channel activity.</title>
        <authorList>
            <person name="Gonzalez-Perrett S."/>
            <person name="Batelli M."/>
            <person name="Kim K."/>
            <person name="Essafi M."/>
            <person name="Timpanaro G."/>
            <person name="Moltabetti N."/>
            <person name="Reisin I.L."/>
            <person name="Arnaout M.A."/>
            <person name="Cantiello H.F."/>
        </authorList>
    </citation>
    <scope>FUNCTION</scope>
    <scope>TRANSPORTER ACTIVITY</scope>
</reference>
<reference key="9">
    <citation type="journal article" date="2002" name="Nat. Cell Biol.">
        <title>Polycystin-2 is an intracellular calcium release channel.</title>
        <authorList>
            <person name="Koulen P."/>
            <person name="Cai Y."/>
            <person name="Geng L."/>
            <person name="Maeda Y."/>
            <person name="Nishimura S."/>
            <person name="Witzgall R."/>
            <person name="Ehrlich B.E."/>
            <person name="Somlo S."/>
        </authorList>
    </citation>
    <scope>FUNCTION</scope>
    <scope>TRANSPORTER ACTIVITY</scope>
    <scope>ACTIVITY REGULATION</scope>
    <scope>SUBCELLULAR LOCATION</scope>
    <scope>CHARACTERIZATION OF VARIANT PKD2 VAL-511</scope>
</reference>
<reference key="10">
    <citation type="journal article" date="2004" name="J. Biol. Chem.">
        <title>Calcium dependence of polycystin-2 channel activity is modulated by phosphorylation at Ser812.</title>
        <authorList>
            <person name="Cai Y."/>
            <person name="Anyatonwu G."/>
            <person name="Okuhara D."/>
            <person name="Lee K.B."/>
            <person name="Yu Z."/>
            <person name="Onoe T."/>
            <person name="Mei C.L."/>
            <person name="Qian Q."/>
            <person name="Geng L."/>
            <person name="Wiztgall R."/>
            <person name="Ehrlich B.E."/>
            <person name="Somlo S."/>
        </authorList>
    </citation>
    <scope>ACTIVITY REGULATION</scope>
    <scope>PHOSPHORYLATION AT SER-812</scope>
</reference>
<reference key="11">
    <citation type="journal article" date="2005" name="Hum. Mol. Genet.">
        <title>A splice form of polycystin-2, lacking exon 7, does not interact with polycystin-1.</title>
        <authorList>
            <person name="Hackmann K."/>
            <person name="Markoff A."/>
            <person name="Qian F."/>
            <person name="Bogdanova N."/>
            <person name="Germino G.G."/>
            <person name="Pennekamp P."/>
            <person name="Dworniczak B."/>
            <person name="Horst J."/>
            <person name="Gerke V."/>
        </authorList>
    </citation>
    <scope>ALTERNATIVE SPLICING (ISOFORMS 2; 3; 4 AND 5)</scope>
</reference>
<reference key="12">
    <citation type="journal article" date="2005" name="EMBO J.">
        <title>Trafficking of TRPP2 by PACS proteins represents a novel mechanism of ion channel regulation.</title>
        <authorList>
            <person name="Koettgen M."/>
            <person name="Benzing T."/>
            <person name="Simmen T."/>
            <person name="Tauber R."/>
            <person name="Buchholz B."/>
            <person name="Feliciangeli S."/>
            <person name="Huber T.B."/>
            <person name="Schermer B."/>
            <person name="Kramer-Zucker A."/>
            <person name="Hoepker K."/>
            <person name="Simmen K.C."/>
            <person name="Tschucke C.C."/>
            <person name="Sandford R."/>
            <person name="Kim E."/>
            <person name="Thomas G."/>
            <person name="Walz G."/>
        </authorList>
    </citation>
    <scope>FUNCTION</scope>
    <scope>TRANSPORTER ACTIVITY</scope>
    <scope>INTERACTION WITH PACS1 AND PACS2</scope>
    <scope>SUBCELLULAR LOCATION</scope>
    <scope>PHOSPHORYLATION AT SER-812</scope>
    <scope>MUTAGENESIS OF SER-812 AND 815-ASP--ASP-817</scope>
</reference>
<reference key="13">
    <citation type="journal article" date="2006" name="Hum. Mol. Genet.">
        <title>Identification of an N-terminal glycogen synthase kinase 3 phosphorylation site which regulates the functional localization of polycystin-2 in vivo and in vitro.</title>
        <authorList>
            <person name="Streets A.J."/>
            <person name="Moon D.J."/>
            <person name="Kane M.E."/>
            <person name="Obara T."/>
            <person name="Ong A.C."/>
        </authorList>
    </citation>
    <scope>ACTIVITY REGULATION</scope>
    <scope>PHOSPHORYLATION AT SER-76; SER-80 AND SER-812</scope>
    <scope>MUTAGENESIS OF SER-76; SER-80; THR-721; SER-801; SER-812; SER-831 AND SER-943</scope>
</reference>
<reference key="14">
    <citation type="journal article" date="2008" name="J. Cell Biol.">
        <title>TRPP2 and TRPV4 form a polymodal sensory channel complex.</title>
        <authorList>
            <person name="Kottgen M."/>
            <person name="Buchholz B."/>
            <person name="Garcia-Gonzalez M.A."/>
            <person name="Kotsis F."/>
            <person name="Fu X."/>
            <person name="Doerken M."/>
            <person name="Boehlke C."/>
            <person name="Steffl D."/>
            <person name="Tauber R."/>
            <person name="Wegierski T."/>
            <person name="Nitschke R."/>
            <person name="Suzuki M."/>
            <person name="Kramer-Zucker A."/>
            <person name="Germino G.G."/>
            <person name="Watnick T."/>
            <person name="Prenen J."/>
            <person name="Nilius B."/>
            <person name="Kuehn E.W."/>
            <person name="Walz G."/>
        </authorList>
    </citation>
    <scope>FUNCTION</scope>
    <scope>INTERACTION WITH TRPV4</scope>
    <scope>SUBCELLULAR LOCATION</scope>
</reference>
<reference key="15">
    <citation type="journal article" date="2009" name="J. Biol. Chem.">
        <title>The transient receptor potential channels TRPP2 and TRPC1 form a heterotetramer with a 2:2 stoichiometry and an alternating subunit arrangement.</title>
        <authorList>
            <person name="Kobori T."/>
            <person name="Smith G.D."/>
            <person name="Sandford R."/>
            <person name="Edwardson J.M."/>
        </authorList>
    </citation>
    <scope>SUBUNIT</scope>
    <scope>INTERACTION WITH TRPC1</scope>
</reference>
<reference key="16">
    <citation type="journal article" date="2009" name="Hum. Mol. Genet.">
        <title>The multimeric structure of polycystin-2 (TRPP2): structural-functional correlates of homo- and hetero-multimers with TRPC1.</title>
        <authorList>
            <person name="Zhang P."/>
            <person name="Luo Y."/>
            <person name="Chasan B."/>
            <person name="Gonzalez-Perrett S."/>
            <person name="Montalbetti N."/>
            <person name="Timpanaro G.A."/>
            <person name="Cantero M.D.R."/>
            <person name="Ramos A.J."/>
            <person name="Goldmann W.H."/>
            <person name="Zhou J."/>
            <person name="Cantiello H.F."/>
        </authorList>
    </citation>
    <scope>SUBUNIT</scope>
    <scope>INTERACTION WITH TRPC1</scope>
</reference>
<reference key="17">
    <citation type="journal article" date="2009" name="Mol. Cell. Proteomics">
        <title>A strategy for precise and large scale identification of core fucosylated glycoproteins.</title>
        <authorList>
            <person name="Jia W."/>
            <person name="Lu Z."/>
            <person name="Fu Y."/>
            <person name="Wang H.P."/>
            <person name="Wang L.H."/>
            <person name="Chi H."/>
            <person name="Yuan Z.F."/>
            <person name="Zheng Z.B."/>
            <person name="Song L.N."/>
            <person name="Han H.H."/>
            <person name="Liang Y.M."/>
            <person name="Wang J.L."/>
            <person name="Cai Y."/>
            <person name="Zhang Y.K."/>
            <person name="Deng Y.L."/>
            <person name="Ying W.T."/>
            <person name="He S.M."/>
            <person name="Qian X.H."/>
        </authorList>
    </citation>
    <scope>GLYCOSYLATION AT ASN-328</scope>
</reference>
<reference key="18">
    <citation type="journal article" date="2010" name="Mol. Biol. Cell">
        <title>Protein kinase D-mediated phosphorylation of polycystin-2 (TRPP2) is essential for its effects on cell growth and calcium channel activity.</title>
        <authorList>
            <person name="Streets A.J."/>
            <person name="Needham A.J."/>
            <person name="Gill S.K."/>
            <person name="Ong A.C."/>
        </authorList>
    </citation>
    <scope>ACTIVITY REGULATION</scope>
    <scope>PHOSPHORYLATION AT SER-801</scope>
    <scope>MUTAGENESIS OF SER-801 AND SER-804</scope>
    <scope>SUBCELLULAR LOCATION</scope>
    <scope>SUBUNIT</scope>
    <scope>INTERACTION WITH PKD1</scope>
</reference>
<reference key="19">
    <citation type="journal article" date="2011" name="Sci. Signal.">
        <title>System-wide temporal characterization of the proteome and phosphoproteome of human embryonic stem cell differentiation.</title>
        <authorList>
            <person name="Rigbolt K.T."/>
            <person name="Prokhorova T.A."/>
            <person name="Akimov V."/>
            <person name="Henningsen J."/>
            <person name="Johansen P.T."/>
            <person name="Kratchmarova I."/>
            <person name="Kassem M."/>
            <person name="Mann M."/>
            <person name="Olsen J.V."/>
            <person name="Blagoev B."/>
        </authorList>
    </citation>
    <scope>PHOSPHORYLATION [LARGE SCALE ANALYSIS] AT SER-812</scope>
    <scope>IDENTIFICATION BY MASS SPECTROMETRY [LARGE SCALE ANALYSIS]</scope>
</reference>
<reference key="20">
    <citation type="journal article" date="2014" name="J. Proteomics">
        <title>An enzyme assisted RP-RPLC approach for in-depth analysis of human liver phosphoproteome.</title>
        <authorList>
            <person name="Bian Y."/>
            <person name="Song C."/>
            <person name="Cheng K."/>
            <person name="Dong M."/>
            <person name="Wang F."/>
            <person name="Huang J."/>
            <person name="Sun D."/>
            <person name="Wang L."/>
            <person name="Ye M."/>
            <person name="Zou H."/>
        </authorList>
    </citation>
    <scope>PHOSPHORYLATION [LARGE SCALE ANALYSIS] AT SER-812</scope>
    <scope>IDENTIFICATION BY MASS SPECTROMETRY [LARGE SCALE ANALYSIS]</scope>
    <source>
        <tissue>Liver</tissue>
    </source>
</reference>
<reference key="21">
    <citation type="journal article" date="2015" name="J. Biol. Chem.">
        <title>The cAMP Signaling Pathway and Direct Protein Kinase A Phosphorylation Regulate Polycystin-2 (TRPP2) Channel Function.</title>
        <authorList>
            <person name="del Rocio Cantero M."/>
            <person name="Velazquez I.F."/>
            <person name="Streets A.J."/>
            <person name="Ong A.C.M."/>
            <person name="Cantiello H.F."/>
        </authorList>
    </citation>
    <scope>FUNCTION</scope>
    <scope>ACTIVITY REGULATION</scope>
    <scope>SUBCELLULAR LOCATION</scope>
    <scope>PHOSPHORYLATION AT SER-829</scope>
    <scope>TISSUE SPECIFICITY</scope>
    <scope>MUTAGENESIS OF SER-829</scope>
</reference>
<reference key="22">
    <citation type="journal article" date="2016" name="Am. J. Hum. Genet.">
        <title>Mutations in GANAB, encoding the glucosidase IIalpha subunit, cause autosomal-dominant polycystic kidney and liver disease.</title>
        <authorList>
            <consortium name="Genkyst Study Group, HALT Progression of Polycystic Kidney Disease Group"/>
            <consortium name="Consortium for Radiologic Imaging Studies of Polycystic Kidney Disease"/>
            <person name="Porath B."/>
            <person name="Gainullin V.G."/>
            <person name="Cornec-Le Gall E."/>
            <person name="Dillinger E.K."/>
            <person name="Heyer C.M."/>
            <person name="Hopp K."/>
            <person name="Edwards M.E."/>
            <person name="Madsen C.D."/>
            <person name="Mauritz S.R."/>
            <person name="Banks C.J."/>
            <person name="Baheti S."/>
            <person name="Reddy B."/>
            <person name="Herrero J.I."/>
            <person name="Banales J.M."/>
            <person name="Hogan M.C."/>
            <person name="Tasic V."/>
            <person name="Watnick T.J."/>
            <person name="Chapman A.B."/>
            <person name="Vigneau C."/>
            <person name="Lavainne F."/>
            <person name="Audrezet M.P."/>
            <person name="Ferec C."/>
            <person name="Le Meur Y."/>
            <person name="Torres V.E."/>
            <person name="Harris P.C."/>
        </authorList>
    </citation>
    <scope>SUBCELLULAR LOCATION</scope>
</reference>
<reference key="23">
    <citation type="journal article" date="2016" name="Nat. Cell Biol.">
        <title>The polycystin complex mediates Wnt/Ca(2+) signalling.</title>
        <authorList>
            <person name="Kim S."/>
            <person name="Nie H."/>
            <person name="Nesin V."/>
            <person name="Tran U."/>
            <person name="Outeda P."/>
            <person name="Bai C.X."/>
            <person name="Keeling J."/>
            <person name="Maskey D."/>
            <person name="Watnick T."/>
            <person name="Wessely O."/>
            <person name="Tsiokas L."/>
        </authorList>
    </citation>
    <scope>FUNCTION</scope>
    <scope>INTERACTION WITH PKD1</scope>
    <scope>SUBCELLULAR LOCATION</scope>
    <scope>CHARACTERIZATION OF VARIANT PKD2 VAL-511</scope>
</reference>
<reference key="24">
    <citation type="journal article" date="2016" name="Proc. Natl. Acad. Sci. U.S.A.">
        <title>Function and regulation of TRPP2 ion channel revealed by a gain-of-function mutant.</title>
        <authorList>
            <person name="Arif Pavel M."/>
            <person name="Lv C."/>
            <person name="Ng C."/>
            <person name="Yang L."/>
            <person name="Kashyap P."/>
            <person name="Lam C."/>
            <person name="Valentino V."/>
            <person name="Fung H.Y."/>
            <person name="Campbell T."/>
            <person name="Moeller S.G."/>
            <person name="Zenisek D."/>
            <person name="Holtzman N.G."/>
            <person name="Yu Y."/>
        </authorList>
    </citation>
    <scope>FUNCTION</scope>
    <scope>TRANSPORTER ACTIVITY</scope>
    <scope>SUBCELLULAR LOCATION</scope>
    <scope>MUTAGENESIS OF PHE-604; PHE-605 AND 736-LEU-ASN-737</scope>
    <scope>CHARACTERIZATION OF VARIANTS PKD2 GLY-414; GLY-420 AND VAL-511</scope>
</reference>
<reference key="25">
    <citation type="journal article" date="2020" name="Elife">
        <title>The heteromeric PC-1/PC-2 polycystin complex is activated by the PC-1 N-terminus.</title>
        <authorList>
            <person name="Ha K."/>
            <person name="Nobuhara M."/>
            <person name="Wang Q."/>
            <person name="Walker R.V."/>
            <person name="Qian F."/>
            <person name="Schartner C."/>
            <person name="Cao E."/>
            <person name="Delling M."/>
        </authorList>
    </citation>
    <scope>FUNCTION</scope>
    <scope>ACTIVITY REGULATION</scope>
</reference>
<reference key="26">
    <citation type="journal article" date="2023" name="Cells">
        <title>Polycystin-1 Interacting Protein-1 (CU062) Interacts with the Ectodomain of Polycystin-1 (PC1).</title>
        <authorList>
            <person name="Lea W.A."/>
            <person name="Winklhofer T."/>
            <person name="Zelenchuk L."/>
            <person name="Sharma M."/>
            <person name="Rossol-Allison J."/>
            <person name="Fields T.A."/>
            <person name="Reif G."/>
            <person name="Calvet J.P."/>
            <person name="Bakeberg J.L."/>
            <person name="Wallace D.P."/>
            <person name="Ward C.J."/>
        </authorList>
    </citation>
    <scope>SUBCELLULAR LOCATION</scope>
</reference>
<reference key="27">
    <citation type="journal article" date="2008" name="J. Biol. Chem.">
        <title>Domain mapping of the polycystin-2 C-terminal tail using de novo molecular modeling and biophysical analysis.</title>
        <authorList>
            <person name="Celic A."/>
            <person name="Petri E.T."/>
            <person name="Demeler B."/>
            <person name="Ehrlich B.E."/>
            <person name="Boggon T.J."/>
        </authorList>
    </citation>
    <scope>3D-STRUCTURE MODELING</scope>
    <scope>PROTEIN SEQUENCE OF 711-715; 720-724; 804-808 AND 823-827</scope>
    <scope>IDENTIFICATION BY MASS SPECTROMETRY</scope>
    <scope>CALCIUM-BINDING</scope>
    <scope>CIRCULAR DICHROISM</scope>
    <scope>SUBUNIT</scope>
    <scope>MUTAGENESIS OF THR-771; GLU-774; LEU-842; VAL-846; MET-849; ILE-853; ILE-856 AND VAL-863</scope>
</reference>
<reference evidence="63 64" key="28">
    <citation type="journal article" date="2009" name="Proc. Natl. Acad. Sci. U.S.A.">
        <title>Structural and molecular basis of the assembly of the TRPP2/PKD1 complex.</title>
        <authorList>
            <person name="Yu Y."/>
            <person name="Ulbrich M.H."/>
            <person name="Li M.H."/>
            <person name="Buraei Z."/>
            <person name="Chen X.Z."/>
            <person name="Ong A.C."/>
            <person name="Tong L."/>
            <person name="Isacoff E.Y."/>
            <person name="Yang J."/>
        </authorList>
    </citation>
    <scope>X-RAY CRYSTALLOGRAPHY (1.90 ANGSTROMS) OF 833-872</scope>
    <scope>COILED COIL</scope>
    <scope>SUBCELLULAR LOCATION</scope>
    <scope>SUBUNIT</scope>
    <scope>MUTAGENESIS OF LEU-842; VAL-846; MET-849; ILE-860; VAL-863 AND LEU-867</scope>
</reference>
<reference evidence="61" key="29">
    <citation type="journal article" date="2010" name="Proc. Natl. Acad. Sci. U.S.A.">
        <title>Structure of the EF-hand domain of polycystin-2 suggests a mechanism for Ca2+-dependent regulation of polycystin-2 channel activity.</title>
        <authorList>
            <person name="Petri E.T."/>
            <person name="Celic A."/>
            <person name="Kennedy S.D."/>
            <person name="Ehrlich B.E."/>
            <person name="Boggon T.J."/>
            <person name="Hodsdon M.E."/>
        </authorList>
    </citation>
    <scope>STRUCTURE BY NMR OF 720-797</scope>
</reference>
<reference evidence="62" key="30">
    <citation type="journal article" date="2014" name="Protein Sci.">
        <title>A high-resolution structure of the EF-hand domain of human polycystin-2.</title>
        <authorList>
            <person name="Allen M.D."/>
            <person name="Qamar S."/>
            <person name="Vadivelu M.K."/>
            <person name="Sandford R.N."/>
            <person name="Bycroft M."/>
        </authorList>
    </citation>
    <scope>STRUCTURE BY NMR OF 717-792 IN COMPLEX WITH CALCIUM</scope>
    <scope>MUTAGENESIS OF GLN-768 AND GLU-774</scope>
</reference>
<reference evidence="68" key="31">
    <citation type="journal article" date="2016" name="Cell">
        <title>The structure of the polycystic kidney disease channel PKD2 in lipid nanodiscs.</title>
        <authorList>
            <person name="Shen P.S."/>
            <person name="Yang X."/>
            <person name="DeCaen P.G."/>
            <person name="Liu X."/>
            <person name="Bulkley D."/>
            <person name="Clapham D.E."/>
            <person name="Cao E."/>
        </authorList>
    </citation>
    <scope>STRUCTURE BY ELECTRON MICROSCOPY (3.00 ANGSTROMS) OF 198-702</scope>
    <scope>SUBUNIT</scope>
    <scope>SUBCELLULAR LOCATION</scope>
    <scope>TOPOLOGY</scope>
    <scope>GLYCOSYLATION AT ASN-328; ASN-362 AND ASN-375</scope>
    <scope>DISULFIDE BONDS</scope>
</reference>
<reference evidence="65" key="32">
    <citation type="journal article" date="2017" name="Nat. Struct. Mol. Biol.">
        <title>Structure of the polycystic kidney disease TRP channel polycystin-2 (PC2).</title>
        <authorList>
            <person name="Grieben M."/>
            <person name="Pike A.C."/>
            <person name="Shintre C.A."/>
            <person name="Venturi E."/>
            <person name="El-Ajouz S."/>
            <person name="Tessitore A."/>
            <person name="Shrestha L."/>
            <person name="Mukhopadhyay S."/>
            <person name="Mahajan P."/>
            <person name="Chalk R."/>
            <person name="Burgess-Brown N.A."/>
            <person name="Sitsapesan R."/>
            <person name="Huiskonen J.T."/>
            <person name="Carpenter E.P."/>
        </authorList>
    </citation>
    <scope>STRUCTURE BY ELECTRON MICROSCOPY (4.20 ANGSTROMS) OF 185-723</scope>
    <scope>SUBUNIT</scope>
    <scope>TOPOLOGY</scope>
    <scope>GLYCOSYLATION AT ASN-328; ASN-362 AND ASN-375</scope>
</reference>
<reference evidence="66 67" key="33">
    <citation type="journal article" date="2017" name="Nat. Struct. Mol. Biol.">
        <title>Molecular insights into lipid-assisted Ca2+ regulation of the TRP channel polycystin-2.</title>
        <authorList>
            <person name="Wilkes M."/>
            <person name="Madej M.G."/>
            <person name="Kreuter L."/>
            <person name="Rhinow D."/>
            <person name="Heinz V."/>
            <person name="De Sanctis S."/>
            <person name="Ruppel S."/>
            <person name="Richter R.M."/>
            <person name="Joos F."/>
            <person name="Grieben M."/>
            <person name="Pike A.C."/>
            <person name="Huiskonen J.T."/>
            <person name="Carpenter E.P."/>
            <person name="Kuhlbrandt W."/>
            <person name="Witzgall R."/>
            <person name="Ziegler C."/>
        </authorList>
    </citation>
    <scope>STRUCTURE BY ELECTRON MICROSCOPY (4.20 ANGSTROMS) IN COMPLEX WITH CALCIUM AND LIPIDS</scope>
    <scope>SUBUNIT</scope>
    <scope>SUBCELLULAR LOCATION</scope>
    <scope>TOPOLOGY</scope>
    <scope>GLYCOSYLATION AT ASN-299; ASN-305; ASN-328; ASN-362 AND ASN-375</scope>
    <scope>DISULFIDE BONDS</scope>
</reference>
<reference evidence="70" key="34">
    <citation type="journal article" date="2018" name="Nat. Commun.">
        <title>Hydrophobic pore gates regulate ion permeation in polycystic kidney disease 2 and 2L1 channels.</title>
        <authorList>
            <person name="Zheng W."/>
            <person name="Yang X."/>
            <person name="Hu R."/>
            <person name="Cai R."/>
            <person name="Hofmann L."/>
            <person name="Wang Z."/>
            <person name="Hu Q."/>
            <person name="Liu X."/>
            <person name="Bulkey D."/>
            <person name="Yu Y."/>
            <person name="Tang J."/>
            <person name="Flockerzi V."/>
            <person name="Cao Y."/>
            <person name="Cao E."/>
            <person name="Chen X.Z."/>
        </authorList>
    </citation>
    <scope>STRUCTURE BY ELECTRON MICROSCOPY (3.54 ANGSTROMS) OF 53-792 OF MUTANT PRO-604</scope>
    <scope>FUNCTION</scope>
    <scope>SUBUNIT</scope>
    <scope>SUBCELLULAR LOCATION</scope>
    <scope>TOPOLOGY</scope>
    <scope>MUTAGENESIS OF TRP-201; PHE-604; LEU-677; TYR-684 AND LYS-688</scope>
    <scope>CHARACTERIZATION OF VARIANT PKD2 VAL-511 AND TYR-684 DEL</scope>
    <scope>DISULFIDE BONDS</scope>
</reference>
<reference evidence="69" key="35">
    <citation type="journal article" date="2018" name="Science">
        <title>Structure of the human PKD1-PKD2 complex.</title>
        <authorList>
            <person name="Su Q."/>
            <person name="Hu F."/>
            <person name="Ge X."/>
            <person name="Lei J."/>
            <person name="Yu S."/>
            <person name="Wang T."/>
            <person name="Zhou Q."/>
            <person name="Mei C."/>
            <person name="Shi Y."/>
        </authorList>
    </citation>
    <scope>STRUCTURE BY ELECTRON MICROSCOPY (3.60 ANGSTROMS) OF 185-723 IN COMPLEX WITH PKD1</scope>
    <scope>SUBUNIT</scope>
    <scope>SUBCELLULAR LOCATION</scope>
    <scope>TOPOLOGY</scope>
</reference>
<reference key="36">
    <citation type="journal article" date="2019" name="EMBO Rep.">
        <title>The ion channel function of polycystin-1 in the polycystin-1/polycystin-2 complex.</title>
        <authorList>
            <person name="Wang Z."/>
            <person name="Ng C."/>
            <person name="Liu X."/>
            <person name="Wang Y."/>
            <person name="Li B."/>
            <person name="Kashyap P."/>
            <person name="Chaudhry H.A."/>
            <person name="Castro A."/>
            <person name="Kalontar E.M."/>
            <person name="Ilyayev L."/>
            <person name="Walker R."/>
            <person name="Alexander R.T."/>
            <person name="Qian F."/>
            <person name="Chen X.Z."/>
            <person name="Yu Y."/>
        </authorList>
    </citation>
    <scope>SUBUNIT</scope>
    <scope>FUNCTION</scope>
    <scope>TRANSPORTER ACTIVITY</scope>
    <scope>MUTAGENESIS OF LEU-677 AND ASN-681</scope>
</reference>
<reference evidence="73" key="37">
    <citation type="journal article" date="2020" name="Proc. Natl. Acad. Sci. U.S.A.">
        <title>Molecular dysregulation of ciliary polycystin-2 channels caused by variants in the TOP domain.</title>
        <authorList>
            <person name="Vien T.N."/>
            <person name="Wang J."/>
            <person name="Ng L.C.T."/>
            <person name="Cao E."/>
            <person name="DeCaen P.G."/>
        </authorList>
    </citation>
    <scope>STRUCTURE BY ELECTRON MICROSCOPY (3.24 ANGSTROMS) OF 41-792 OF MUTANT SER-331</scope>
    <scope>GLYCOSYLATION AT ASN-328; ASN-362 AND ASN-375</scope>
    <scope>MUTAGENESIS OF CYS-331</scope>
</reference>
<reference evidence="71 72" key="38">
    <citation type="journal article" date="2020" name="Structure">
        <title>Lipid Interactions of a Ciliary Membrane TRP Channel: Simulation and Structural Studies of Polycystin-2.</title>
        <authorList>
            <person name="Wang Q."/>
            <person name="Corey R.A."/>
            <person name="Hedger G."/>
            <person name="Aryal P."/>
            <person name="Grieben M."/>
            <person name="Nasrallah C."/>
            <person name="Baronina A."/>
            <person name="Pike A.C.W."/>
            <person name="Shi J."/>
            <person name="Carpenter E.P."/>
            <person name="Sansom M.S.P."/>
        </authorList>
    </citation>
    <scope>STRUCTURE BY ELECTRON MICROSCOPY (2.96 ANGSTROMS) OF 185-723 IN COMPLEX WITH CHOLESTEROL AND CA(2+)</scope>
    <scope>SUBUNIT</scope>
</reference>
<reference key="39">
    <citation type="journal article" date="2023" name="J. Physiol. (Lond.)">
        <title>Regulation of PKD2 channel function by TACAN.</title>
        <authorList>
            <person name="Liu X."/>
            <person name="Zhang R."/>
            <person name="Fatehi M."/>
            <person name="Wang Y."/>
            <person name="Long W."/>
            <person name="Tian R."/>
            <person name="Deng X."/>
            <person name="Weng Z."/>
            <person name="Xu Q."/>
            <person name="Light P.E."/>
            <person name="Tang J."/>
            <person name="Chen X.Z."/>
        </authorList>
    </citation>
    <scope>ACTIVITY REGULATION</scope>
    <scope>INTERACTION WITH TMEM120A</scope>
    <scope>MUTAGENESIS OF PHE-604</scope>
</reference>
<reference evidence="74" key="40">
    <citation type="journal article" date="2024" name="Proc. Natl. Acad. Sci. U.S.A.">
        <title>Molecular and structural basis of the dual regulation of the polycystin-2 ion channel by small-molecule ligands.</title>
        <authorList>
            <person name="Wang Z."/>
            <person name="Chen M."/>
            <person name="Su Q."/>
            <person name="Morais T.D.C."/>
            <person name="Wang Y."/>
            <person name="Nazginov E."/>
            <person name="Pillai A.R."/>
            <person name="Qian F."/>
            <person name="Shi Y."/>
            <person name="Yu Y."/>
        </authorList>
    </citation>
    <scope>STRUCTURE BY ELECTRON MICROSCOPY (3.00 ANGSTROMS) OF 185-719 IN COMPLEX WITH CALCIUM AND AGONISTS</scope>
    <scope>SUBUNIT</scope>
    <scope>DISULFIDE BOND</scope>
    <scope>GLYCOSYLATION AT ASN-328; ASN-362 AND ASN-375</scope>
</reference>
<reference key="41">
    <citation type="journal article" date="2024" name="J. Biol. Chem.">
        <title>Disease-associated missense mutations in the pore loop of polycystin-2 alter its ion channel function in a heterologous expression system.</title>
        <authorList>
            <person name="Staudner T."/>
            <person name="Geiges L."/>
            <person name="Khamseekaew J."/>
            <person name="Sure F."/>
            <person name="Korbmacher C."/>
            <person name="Ilyaskin A.V."/>
        </authorList>
    </citation>
    <scope>FUNCTION</scope>
    <scope>CATALYTIC ACTIVITY</scope>
    <scope>MUTAGENESIS OF PHE-604; PHE-629; ARG-638; LEU-677 AND ASN-681</scope>
    <scope>CHARACTERIZATION OF VARIANT PKD2 ARG-632</scope>
</reference>
<reference key="42">
    <citation type="journal article" date="1997" name="Am. J. Hum. Genet.">
        <title>A spectrum of mutations in the second gene for autosomal dominant polycystic kidney disease (PKD2).</title>
        <authorList>
            <person name="Veldhuisen B."/>
            <person name="Saris J.J."/>
            <person name="de Haij S."/>
            <person name="Hayashi T."/>
            <person name="Reynolds D.M."/>
            <person name="Mochizuki T."/>
            <person name="Elles R."/>
            <person name="Fossdal R."/>
            <person name="Bogdanova N."/>
            <person name="van Dijk M.A."/>
            <person name="Coto E."/>
            <person name="Ravine D."/>
            <person name="Noerby S."/>
            <person name="Verellen-Dumoulin C."/>
            <person name="Breuning M.H."/>
            <person name="Somlo S."/>
            <person name="Peters D.J.M."/>
        </authorList>
    </citation>
    <scope>VARIANT PKD2 GLY-414</scope>
</reference>
<reference key="43">
    <citation type="journal article" date="1999" name="J. Am. Soc. Nephrol.">
        <title>Aberrant splicing in the PKD2 gene as a cause of polycystic kidney disease.</title>
        <authorList>
            <person name="Reynolds D.M."/>
            <person name="Hayashi T."/>
            <person name="Cai Y."/>
            <person name="Veldhuisen B."/>
            <person name="Watnick T.J."/>
            <person name="Lens X.M."/>
            <person name="Mochizuki T."/>
            <person name="Qian F."/>
            <person name="Maeda Y."/>
            <person name="Li L."/>
            <person name="Fossdal R."/>
            <person name="Coto E."/>
            <person name="Wu G."/>
            <person name="Breuning M.H."/>
            <person name="Germino G.G."/>
            <person name="Peters D.J.M."/>
            <person name="Somlo S."/>
        </authorList>
    </citation>
    <scope>VARIANT PKD2 VAL-511</scope>
</reference>
<reference key="44">
    <citation type="journal article" date="1999" name="Kidney Int.">
        <title>Seven novel mutations of the PKD2 gene in families with autosomal dominant polycystic kidney disease.</title>
        <authorList>
            <person name="Torra R."/>
            <person name="Viribay M."/>
            <person name="Telleria D."/>
            <person name="Badenas C."/>
            <person name="Watson M."/>
            <person name="Harris P.C."/>
            <person name="Darnell A."/>
            <person name="San Millan J.L."/>
        </authorList>
    </citation>
    <scope>VARIANT PKD2 PRO-356</scope>
    <scope>VARIANT PRO-28</scope>
</reference>
<reference key="45">
    <citation type="journal article" date="2000" name="Nat. Genet.">
        <title>Mutations of PKD1 in ADPKD2 cysts suggest a pathogenic effect of trans-heterozygous mutations.</title>
        <authorList>
            <person name="Watnick T.J."/>
            <person name="He N."/>
            <person name="Wang K."/>
            <person name="Liang Y."/>
            <person name="Parfrey P."/>
            <person name="Hefferton D."/>
            <person name="St George-Hyslop P.H."/>
            <person name="Germino G.G."/>
            <person name="Pei Y."/>
        </authorList>
    </citation>
    <scope>VARIANTS PKD2 ILE-479 DEL; 504-ARG--VAL-512 DEL AND TYR-684 DEL</scope>
</reference>
<reference key="46">
    <citation type="journal article" date="2002" name="Hum. Mutat.">
        <title>Four novel mutations of the PKD2 gene in Czech families with autosomal dominant polycystic kidney disease.</title>
        <authorList>
            <person name="Reiterova J."/>
            <person name="Stekrova J."/>
            <person name="Peters D.J.M."/>
            <person name="Kapras J."/>
            <person name="Kohoutova M."/>
            <person name="Merta M."/>
            <person name="Zidovska J."/>
        </authorList>
    </citation>
    <scope>VARIANT PKD2 TRP-322</scope>
    <scope>VARIANTS LEU-24; PRO-28 AND LEU-800</scope>
</reference>
<reference key="47">
    <citation type="journal article" date="2003" name="J. Am. Soc. Nephrol.">
        <title>Genotype-renal function correlation in type 2 autosomal dominant polycystic kidney disease.</title>
        <authorList>
            <person name="Magistroni R."/>
            <person name="He N."/>
            <person name="Wang K."/>
            <person name="Andrew R."/>
            <person name="Johnson A."/>
            <person name="Gabow P."/>
            <person name="Dicks E."/>
            <person name="Parfrey P."/>
            <person name="Torra R."/>
            <person name="San-Millan J.L."/>
            <person name="Coto E."/>
            <person name="Van Dijk M."/>
            <person name="Breuning M."/>
            <person name="Peters D."/>
            <person name="Bogdanova N."/>
            <person name="Ligabue G."/>
            <person name="Albertazzi A."/>
            <person name="Hateboer N."/>
            <person name="Demetriou K."/>
            <person name="Pierides A."/>
            <person name="Deltas C."/>
            <person name="St George-Hyslop P."/>
            <person name="Ravine D."/>
            <person name="Pei Y."/>
        </authorList>
    </citation>
    <scope>VARIANTS PKD2 PRO-356; GLY-414; ARG-632 AND GLN-807</scope>
</reference>
<reference key="48">
    <citation type="journal article" date="2004" name="Nephrol. Dial. Transplant.">
        <title>PKD2 mutations in a Czech population with autosomal dominant polycystic kidney disease.</title>
        <authorList>
            <person name="Stekrova J."/>
            <person name="Reiterova J."/>
            <person name="Merta M."/>
            <person name="Damborsky J."/>
            <person name="Zidovska J."/>
            <person name="Kebrdlova V."/>
            <person name="Kohoutova M."/>
        </authorList>
    </citation>
    <scope>VARIANTS PKD2 GLN-306 AND GLY-420</scope>
    <scope>VARIANT PRO-28</scope>
</reference>
<reference key="49">
    <citation type="journal article" date="2005" name="J. Mol. Med.">
        <title>Genetics and phenotypic characteristics of autosomal dominant polycystic kidney disease in Finns.</title>
        <authorList>
            <person name="Peltola P."/>
            <person name="Lumiaho A."/>
            <person name="Miettinen R."/>
            <person name="Pihlajamaeki J."/>
            <person name="Sandford R."/>
            <person name="Laakso M."/>
        </authorList>
    </citation>
    <scope>VARIANT PKD2 GLN-322</scope>
</reference>
<reference key="50">
    <citation type="journal article" date="2009" name="Hum. Mutat.">
        <title>Novel method for genomic analysis of PKD1 and PKD2 mutations in autosomal dominant polycystic kidney disease.</title>
        <authorList>
            <person name="Tan Y.-C."/>
            <person name="Blumenfeld J.D."/>
            <person name="Anghel R."/>
            <person name="Donahue S."/>
            <person name="Belenkaya R."/>
            <person name="Balina M."/>
            <person name="Parker T."/>
            <person name="Levine D."/>
            <person name="Leonard D.G.B."/>
            <person name="Rennert H."/>
        </authorList>
    </citation>
    <scope>VARIANTS PRO-28; THR-190 AND CYS-482</scope>
</reference>
<reference key="51">
    <citation type="journal article" date="2011" name="Nephrol. Dial. Transplant.">
        <title>Novel PKD1 and PKD2 mutations in autosomal dominant polycystic kidney disease (ADPKD).</title>
        <authorList>
            <person name="Hoefele J."/>
            <person name="Mayer K."/>
            <person name="Scholz M."/>
            <person name="Klein H.G."/>
        </authorList>
    </citation>
    <scope>VARIANT PKD2 PRO-384</scope>
</reference>
<evidence type="ECO:0000250" key="1">
    <source>
        <dbReference type="UniProtKB" id="O35245"/>
    </source>
</evidence>
<evidence type="ECO:0000255" key="2">
    <source>
        <dbReference type="PROSITE-ProRule" id="PRU00448"/>
    </source>
</evidence>
<evidence type="ECO:0000256" key="3">
    <source>
        <dbReference type="SAM" id="MobiDB-lite"/>
    </source>
</evidence>
<evidence type="ECO:0000269" key="4">
    <source>
    </source>
</evidence>
<evidence type="ECO:0000269" key="5">
    <source>
    </source>
</evidence>
<evidence type="ECO:0000269" key="6">
    <source>
    </source>
</evidence>
<evidence type="ECO:0000269" key="7">
    <source>
    </source>
</evidence>
<evidence type="ECO:0000269" key="8">
    <source>
    </source>
</evidence>
<evidence type="ECO:0000269" key="9">
    <source>
    </source>
</evidence>
<evidence type="ECO:0000269" key="10">
    <source>
    </source>
</evidence>
<evidence type="ECO:0000269" key="11">
    <source>
    </source>
</evidence>
<evidence type="ECO:0000269" key="12">
    <source>
    </source>
</evidence>
<evidence type="ECO:0000269" key="13">
    <source>
    </source>
</evidence>
<evidence type="ECO:0000269" key="14">
    <source>
    </source>
</evidence>
<evidence type="ECO:0000269" key="15">
    <source>
    </source>
</evidence>
<evidence type="ECO:0000269" key="16">
    <source>
    </source>
</evidence>
<evidence type="ECO:0000269" key="17">
    <source>
    </source>
</evidence>
<evidence type="ECO:0000269" key="18">
    <source>
    </source>
</evidence>
<evidence type="ECO:0000269" key="19">
    <source>
    </source>
</evidence>
<evidence type="ECO:0000269" key="20">
    <source>
    </source>
</evidence>
<evidence type="ECO:0000269" key="21">
    <source>
    </source>
</evidence>
<evidence type="ECO:0000269" key="22">
    <source>
    </source>
</evidence>
<evidence type="ECO:0000269" key="23">
    <source>
    </source>
</evidence>
<evidence type="ECO:0000269" key="24">
    <source>
    </source>
</evidence>
<evidence type="ECO:0000269" key="25">
    <source>
    </source>
</evidence>
<evidence type="ECO:0000269" key="26">
    <source>
    </source>
</evidence>
<evidence type="ECO:0000269" key="27">
    <source>
    </source>
</evidence>
<evidence type="ECO:0000269" key="28">
    <source>
    </source>
</evidence>
<evidence type="ECO:0000269" key="29">
    <source>
    </source>
</evidence>
<evidence type="ECO:0000269" key="30">
    <source>
    </source>
</evidence>
<evidence type="ECO:0000269" key="31">
    <source>
    </source>
</evidence>
<evidence type="ECO:0000269" key="32">
    <source>
    </source>
</evidence>
<evidence type="ECO:0000269" key="33">
    <source>
    </source>
</evidence>
<evidence type="ECO:0000269" key="34">
    <source>
    </source>
</evidence>
<evidence type="ECO:0000269" key="35">
    <source>
    </source>
</evidence>
<evidence type="ECO:0000269" key="36">
    <source>
    </source>
</evidence>
<evidence type="ECO:0000269" key="37">
    <source>
    </source>
</evidence>
<evidence type="ECO:0000269" key="38">
    <source>
    </source>
</evidence>
<evidence type="ECO:0000269" key="39">
    <source>
    </source>
</evidence>
<evidence type="ECO:0000269" key="40">
    <source>
    </source>
</evidence>
<evidence type="ECO:0000269" key="41">
    <source>
    </source>
</evidence>
<evidence type="ECO:0000269" key="42">
    <source>
    </source>
</evidence>
<evidence type="ECO:0000269" key="43">
    <source>
    </source>
</evidence>
<evidence type="ECO:0000269" key="44">
    <source>
    </source>
</evidence>
<evidence type="ECO:0000269" key="45">
    <source>
    </source>
</evidence>
<evidence type="ECO:0000269" key="46">
    <source>
    </source>
</evidence>
<evidence type="ECO:0000269" key="47">
    <source>
    </source>
</evidence>
<evidence type="ECO:0000269" key="48">
    <source>
    </source>
</evidence>
<evidence type="ECO:0000269" key="49">
    <source>
    </source>
</evidence>
<evidence type="ECO:0000303" key="50">
    <source>
    </source>
</evidence>
<evidence type="ECO:0000303" key="51">
    <source>
    </source>
</evidence>
<evidence type="ECO:0000303" key="52">
    <source>
    </source>
</evidence>
<evidence type="ECO:0000305" key="53"/>
<evidence type="ECO:0000305" key="54">
    <source>
    </source>
</evidence>
<evidence type="ECO:0000305" key="55">
    <source>
    </source>
</evidence>
<evidence type="ECO:0000305" key="56">
    <source>
    </source>
</evidence>
<evidence type="ECO:0000305" key="57">
    <source>
    </source>
</evidence>
<evidence type="ECO:0000305" key="58">
    <source>
    </source>
</evidence>
<evidence type="ECO:0000305" key="59">
    <source>
    </source>
</evidence>
<evidence type="ECO:0000312" key="60">
    <source>
        <dbReference type="HGNC" id="HGNC:9009"/>
    </source>
</evidence>
<evidence type="ECO:0007744" key="61">
    <source>
        <dbReference type="PDB" id="2KQ6"/>
    </source>
</evidence>
<evidence type="ECO:0007744" key="62">
    <source>
        <dbReference type="PDB" id="2Y4Q"/>
    </source>
</evidence>
<evidence type="ECO:0007744" key="63">
    <source>
        <dbReference type="PDB" id="3HRN"/>
    </source>
</evidence>
<evidence type="ECO:0007744" key="64">
    <source>
        <dbReference type="PDB" id="3HRO"/>
    </source>
</evidence>
<evidence type="ECO:0007744" key="65">
    <source>
        <dbReference type="PDB" id="5K47"/>
    </source>
</evidence>
<evidence type="ECO:0007744" key="66">
    <source>
        <dbReference type="PDB" id="5MKE"/>
    </source>
</evidence>
<evidence type="ECO:0007744" key="67">
    <source>
        <dbReference type="PDB" id="5MKF"/>
    </source>
</evidence>
<evidence type="ECO:0007744" key="68">
    <source>
        <dbReference type="PDB" id="5T4D"/>
    </source>
</evidence>
<evidence type="ECO:0007744" key="69">
    <source>
        <dbReference type="PDB" id="6A70"/>
    </source>
</evidence>
<evidence type="ECO:0007744" key="70">
    <source>
        <dbReference type="PDB" id="6D1W"/>
    </source>
</evidence>
<evidence type="ECO:0007744" key="71">
    <source>
        <dbReference type="PDB" id="6T9N"/>
    </source>
</evidence>
<evidence type="ECO:0007744" key="72">
    <source>
        <dbReference type="PDB" id="6T9O"/>
    </source>
</evidence>
<evidence type="ECO:0007744" key="73">
    <source>
        <dbReference type="PDB" id="6WB8"/>
    </source>
</evidence>
<evidence type="ECO:0007744" key="74">
    <source>
        <dbReference type="PDB" id="8HK7"/>
    </source>
</evidence>
<evidence type="ECO:0007744" key="75">
    <source>
    </source>
</evidence>
<evidence type="ECO:0007744" key="76">
    <source>
    </source>
</evidence>
<evidence type="ECO:0007829" key="77">
    <source>
        <dbReference type="PDB" id="2KLD"/>
    </source>
</evidence>
<evidence type="ECO:0007829" key="78">
    <source>
        <dbReference type="PDB" id="2KQ6"/>
    </source>
</evidence>
<evidence type="ECO:0007829" key="79">
    <source>
        <dbReference type="PDB" id="2Y4Q"/>
    </source>
</evidence>
<evidence type="ECO:0007829" key="80">
    <source>
        <dbReference type="PDB" id="3HRN"/>
    </source>
</evidence>
<evidence type="ECO:0007829" key="81">
    <source>
        <dbReference type="PDB" id="5T4D"/>
    </source>
</evidence>
<evidence type="ECO:0007829" key="82">
    <source>
        <dbReference type="PDB" id="6T9N"/>
    </source>
</evidence>
<evidence type="ECO:0007829" key="83">
    <source>
        <dbReference type="PDB" id="6WB8"/>
    </source>
</evidence>
<evidence type="ECO:0007829" key="84">
    <source>
        <dbReference type="PDB" id="8HK7"/>
    </source>
</evidence>
<sequence length="968" mass="109691">MVNSSRVQPQQPGDAKRPPAPRAPDPGRLMAGCAAVGASLAAPGGLCEQRGLEIEMQRIRQAAARDPPAGAAASPSPPLSSCSRQAWSRDNPGFEAEEEEEEVEGEEGGMVVEMDVEWRPGSRRSAASSAVSSVGARSRGLGGYHGAGHPSGRRRRREDQGPPCPSPVGGGDPLHRHLPLEGQPPRVAWAERLVRGLRGLWGTRLMEESSTNREKYLKSVLRELVTYLLFLIVLCILTYGMMSSNVYYYTRMMSQLFLDTPVSKTEKTNFKTLSSMEDFWKFTEGSLLDGLYWKMQPSNQTEADNRSFIFYENLLLGVPRIRQLRVRNGSCSIPQDLRDEIKECYDVYSVSSEDRAPFGPRNGTAWIYTSEKDLNGSSHWGIIATYSGAGYYLDLSRTREETAAQVASLKKNVWLDRGTRATFIDFSVYNANINLFCVVRLLVEFPATGGVIPSWQFQPLKLIRYVTTFDFFLAACEIIFCFFIFYYVVEEILEIRIHKLHYFRSFWNCLDVVIVVLSVVAIGINIYRTSNVEVLLQFLEDQNTFPNFEHLAYWQIQFNNIAAVTVFFVWIKLFKFINFNRTMSQLSTTMSRCAKDLFGFAIMFFIIFLAYAQLAYLVFGTQVDDFSTFQECIFTQFRIILGDINFAEIEEANRVLGPIYFTTFVFFMFFILLNMFLAIINDTYSEVKSDLAQQKAEMELSDLIRKGYHKALVKLKLKKNTVDDISESLRQGGGKLNFDELRQDLKGKGHTDAEIEAIFTKYDQDGDQELTEHEHQQMRDDLEKEREDLDLDHSSLPRPMSSRSFPRSLDDSEEDDDEDSGHSSRRRGSISSGVSYEEFQVLVRRVDRMEHSIGSIVSKIDAVIVKLEIMERAKLKRREVLGRLLDGVAEDERLGRDSEIHREQMERLVREELERWESDDAASQISHGLGTPVGLNGQPRPRSSRPSSSQSTEGMEGAGGNGSSNVHV</sequence>
<comment type="function">
    <text evidence="1 10 12 17 21 31 32 33 38 40 43 47">Forms a nonselective cation channel (PubMed:11854751, PubMed:11991947, PubMed:15692563, PubMed:26269590, PubMed:27071085, PubMed:31441214, PubMed:39009345). Can function as a homotetrameric ion channel or can form heteromer with PKD1 (PubMed:31441214, PubMed:33164752). Displays distinct function depending on its subcellular localization and regulation by its binding partners (PubMed:11854751, PubMed:11991947, PubMed:27214281, PubMed:29899465). In primary cilium functions as a cation channel, with a preference for monovalent cations over divalent cations that allows K(+), Na(+) and Ca(2+) influx, with low selectivity for Ca(2+) (PubMed:27071085). Involved in fluid-flow mechanosensation by the primary cilium in renal epithelium (By similarity). In the endoplasmic reticulum, likely functions as a K(+) channel to facilitate Ca(2+) release (By similarity). The heterotetrameric PKD1/PKD2 channel has higher Ca(2+) permeability than homomeric PKD2 channel and acts as a primarily Ca(2+)-permeable channel (PubMed:31441214). Interacts with and acts as a regulator of a number of other channels, such as TRPV4, TRPC1, IP3R, RYR2, ultimately further affecting intracellular signaling, to modulate intracellular Ca(2+) signaling (PubMed:11854751, PubMed:11991947, PubMed:27214281, PubMed:29899465). Together with TRPV4, forms mechano- and thermosensitive channels in cilium (PubMed:18695040). In cardiomyocytes, PKD2 modulates Ca(2+) release from stimulated RYR2 receptors through direct association (By similarity). Also involved in left-right axis specification via its role in sensing nodal flow; forms a complex with PKD1L1 in cilia to facilitate flow detection in left-right patterning (By similarity). Acts as a regulator of cilium length together with PKD1 (By similarity). Mediates systemic blood pressure and contributes to the myogenic response in cerebral arteries though vasoconstriction (By similarity).</text>
</comment>
<comment type="catalytic activity">
    <reaction evidence="12 32 47">
        <text>K(+)(in) = K(+)(out)</text>
        <dbReference type="Rhea" id="RHEA:29463"/>
        <dbReference type="ChEBI" id="CHEBI:29103"/>
    </reaction>
</comment>
<comment type="catalytic activity">
    <reaction evidence="47">
        <text>Na(+)(in) = Na(+)(out)</text>
        <dbReference type="Rhea" id="RHEA:34963"/>
        <dbReference type="ChEBI" id="CHEBI:29101"/>
    </reaction>
</comment>
<comment type="catalytic activity">
    <reaction evidence="10 17 40 46">
        <text>Ca(2+)(in) = Ca(2+)(out)</text>
        <dbReference type="Rhea" id="RHEA:29671"/>
        <dbReference type="ChEBI" id="CHEBI:29108"/>
    </reaction>
</comment>
<comment type="activity regulation">
    <text evidence="1 10 14 19 27 31 43 44">Channel activity is regulated by phosphorylation (PubMed:16551655, PubMed:20881056, PubMed:26269590). Channel activity is regulated by intracellular Ca(2+) (PubMed:11854751, PubMed:14742446). At the endoplasmic reticulum membrane (ER), TMEM33 enhances its channel activity (By similarity). TMEM120A inhibits the channel activity of PKD2, and mediates mechanosensitivity of the PKD2-TMEM120A channel complex (PubMed:36420836). PKD1/PKD2 complex on the plasma membrane is activated by PKD1 N-terminus (PubMed:33164752).</text>
</comment>
<comment type="subunit">
    <text evidence="1 6 9 17 21 24 25 26 27 35 36 37 41 44 46">Homotetramer (PubMed:20881056, PubMed:27768895, PubMed:27991905, PubMed:28092368, PubMed:29899465, PubMed:31806353, PubMed:38483987). Component of the heterotetrameric polycystin channel complex with PKD1; the tetramer contains one PKD1 chain and three PKD2 chains (PubMed:19556541, PubMed:20881056, PubMed:27214281, PubMed:30093605). Isoform 1 interacts with PKD1 while isoform 3 does not (By similarity). Interacts with PKD1L1; probably forms a Ca(2+) channel (By similarity). Interacts with CD2AP (PubMed:10913159). Interacts with HAX1 (PubMed:10760273). Interacts with NEK8 (By similarity). Part of a complex containing AKAP5, ADCY5, ADCY6 and PDE4C (By similarity). Interacts (via C-terminus) with TRPV4 (via C-terminus) (PubMed:18695040). Interacts (via C-terminal acidic region) with PACS1 and PACS2; these interactions retain the protein in the endoplasmic reticulum and prevent trafficking to the cell membrane (PubMed:15692563). Interacts with TMEM33 (By similarity). Form a heterotetramer with TRPC1 with a 2:2 stoichiometry; has distinct channel properties separate from PKD2 or TRPC1 homomers alone (PubMed:19193631, PubMed:19850920). Interacts with TMEM120A; TMEM120A inhibits PKD2 channel activity through the physical association of PKD2 with TMEM120A (PubMed:36420836). Interacts (via N-terminus) with RYR2; regulates RYR2 channel activity (By similarity).</text>
</comment>
<comment type="interaction">
    <interactant intactId="EBI-7813714">
        <id>Q13563</id>
    </interactant>
    <interactant intactId="EBI-3867333">
        <id>A8MQ03</id>
        <label>CYSRT1</label>
    </interactant>
    <organismsDiffer>false</organismsDiffer>
    <experiments>3</experiments>
</comment>
<comment type="interaction">
    <interactant intactId="EBI-7813714">
        <id>Q13563</id>
    </interactant>
    <interactant intactId="EBI-20832568">
        <id>Q96BQ1</id>
        <label>FAM3D</label>
    </interactant>
    <organismsDiffer>false</organismsDiffer>
    <experiments>2</experiments>
</comment>
<comment type="interaction">
    <interactant intactId="EBI-7813714">
        <id>Q13563</id>
    </interactant>
    <interactant intactId="EBI-7116203">
        <id>O75031</id>
        <label>HSF2BP</label>
    </interactant>
    <organismsDiffer>false</organismsDiffer>
    <experiments>3</experiments>
</comment>
<comment type="interaction">
    <interactant intactId="EBI-7813714">
        <id>Q13563</id>
    </interactant>
    <interactant intactId="EBI-713450">
        <id>Q02363</id>
        <label>ID2</label>
    </interactant>
    <organismsDiffer>false</organismsDiffer>
    <experiments>7</experiments>
</comment>
<comment type="interaction">
    <interactant intactId="EBI-7813714">
        <id>Q13563</id>
    </interactant>
    <interactant intactId="EBI-10171697">
        <id>Q6A162</id>
        <label>KRT40</label>
    </interactant>
    <organismsDiffer>false</organismsDiffer>
    <experiments>3</experiments>
</comment>
<comment type="interaction">
    <interactant intactId="EBI-7813714">
        <id>Q13563</id>
    </interactant>
    <interactant intactId="EBI-10171774">
        <id>P60410</id>
        <label>KRTAP10-8</label>
    </interactant>
    <organismsDiffer>false</organismsDiffer>
    <experiments>3</experiments>
</comment>
<comment type="interaction">
    <interactant intactId="EBI-7813714">
        <id>Q13563</id>
    </interactant>
    <interactant intactId="EBI-11962084">
        <id>Q3LI66</id>
        <label>KRTAP6-2</label>
    </interactant>
    <organismsDiffer>false</organismsDiffer>
    <experiments>3</experiments>
</comment>
<comment type="interaction">
    <interactant intactId="EBI-7813714">
        <id>Q13563</id>
    </interactant>
    <interactant intactId="EBI-10182930">
        <id>P43361</id>
        <label>MAGEA8</label>
    </interactant>
    <organismsDiffer>false</organismsDiffer>
    <experiments>4</experiments>
</comment>
<comment type="interaction">
    <interactant intactId="EBI-7813714">
        <id>Q13563</id>
    </interactant>
    <interactant intactId="EBI-724076">
        <id>Q99750</id>
        <label>MDFI</label>
    </interactant>
    <organismsDiffer>false</organismsDiffer>
    <experiments>3</experiments>
</comment>
<comment type="interaction">
    <interactant intactId="EBI-7813714">
        <id>Q13563</id>
    </interactant>
    <interactant intactId="EBI-1752013">
        <id>P98161</id>
        <label>PKD1</label>
    </interactant>
    <organismsDiffer>false</organismsDiffer>
    <experiments>8</experiments>
</comment>
<comment type="interaction">
    <interactant intactId="EBI-7813714">
        <id>Q13563</id>
    </interactant>
    <interactant intactId="EBI-1951183">
        <id>P98161-1</id>
        <label>PKD1</label>
    </interactant>
    <organismsDiffer>false</organismsDiffer>
    <experiments>4</experiments>
</comment>
<comment type="interaction">
    <interactant intactId="EBI-7813714">
        <id>Q13563</id>
    </interactant>
    <interactant intactId="EBI-7813714">
        <id>Q13563</id>
        <label>PKD2</label>
    </interactant>
    <organismsDiffer>false</organismsDiffer>
    <experiments>11</experiments>
</comment>
<comment type="interaction">
    <interactant intactId="EBI-7813714">
        <id>Q13563</id>
    </interactant>
    <interactant intactId="EBI-740019">
        <id>O15162</id>
        <label>PLSCR1</label>
    </interactant>
    <organismsDiffer>false</organismsDiffer>
    <experiments>3</experiments>
</comment>
<comment type="interaction">
    <interactant intactId="EBI-7813714">
        <id>Q13563</id>
    </interactant>
    <interactant intactId="EBI-929665">
        <id>P48995</id>
        <label>TRPC1</label>
    </interactant>
    <organismsDiffer>false</organismsDiffer>
    <experiments>12</experiments>
</comment>
<comment type="interaction">
    <interactant intactId="EBI-7813714">
        <id>Q13563</id>
    </interactant>
    <interactant intactId="EBI-9830970">
        <id>P48995-2</id>
        <label>TRPC1</label>
    </interactant>
    <organismsDiffer>false</organismsDiffer>
    <experiments>4</experiments>
</comment>
<comment type="interaction">
    <interactant intactId="EBI-7813714">
        <id>Q13563</id>
    </interactant>
    <interactant intactId="EBI-642449">
        <id>O35387</id>
        <label>Hax1</label>
    </interactant>
    <organismsDiffer>true</organismsDiffer>
    <experiments>3</experiments>
</comment>
<comment type="interaction">
    <interactant intactId="EBI-7813714">
        <id>Q13563</id>
    </interactant>
    <interactant intactId="EBI-9633447">
        <id>Q91908</id>
        <label>itpr1.S</label>
    </interactant>
    <organismsDiffer>true</organismsDiffer>
    <experiments>2</experiments>
</comment>
<comment type="interaction">
    <interactant intactId="EBI-7813714">
        <id>Q13563</id>
    </interactant>
    <interactant intactId="EBI-10051366">
        <id>Q9QZC1</id>
        <label>Trpc3</label>
    </interactant>
    <organismsDiffer>true</organismsDiffer>
    <experiments>3</experiments>
</comment>
<comment type="interaction">
    <interactant intactId="EBI-7813714">
        <id>Q13563</id>
    </interactant>
    <interactant intactId="EBI-7091763">
        <id>Q9EPK8</id>
        <label>Trpv4</label>
    </interactant>
    <organismsDiffer>true</organismsDiffer>
    <experiments>11</experiments>
</comment>
<comment type="interaction">
    <interactant intactId="EBI-9837017">
        <id>Q13563-1</id>
    </interactant>
    <interactant intactId="EBI-1752013">
        <id>P98161</id>
        <label>PKD1</label>
    </interactant>
    <organismsDiffer>false</organismsDiffer>
    <experiments>5</experiments>
</comment>
<comment type="interaction">
    <interactant intactId="EBI-9837017">
        <id>Q13563-1</id>
    </interactant>
    <interactant intactId="EBI-15930070">
        <id>P98161-3</id>
        <label>PKD1</label>
    </interactant>
    <organismsDiffer>false</organismsDiffer>
    <experiments>4</experiments>
</comment>
<comment type="interaction">
    <interactant intactId="EBI-9837017">
        <id>Q13563-1</id>
    </interactant>
    <interactant intactId="EBI-9837017">
        <id>Q13563-1</id>
        <label>PKD2</label>
    </interactant>
    <organismsDiffer>false</organismsDiffer>
    <experiments>12</experiments>
</comment>
<comment type="interaction">
    <interactant intactId="EBI-9837017">
        <id>Q13563-1</id>
    </interactant>
    <interactant intactId="EBI-6666305">
        <id>O08852</id>
        <label>Pkd1</label>
    </interactant>
    <organismsDiffer>true</organismsDiffer>
    <experiments>2</experiments>
</comment>
<comment type="subcellular location">
    <subcellularLocation>
        <location evidence="21 27 34">Cell projection</location>
        <location evidence="21 27 34">Cilium membrane</location>
        <topology evidence="35 36 37 38 39">Multi-pass membrane protein</topology>
    </subcellularLocation>
    <subcellularLocation>
        <location evidence="6 10 17 27 37 54">Endoplasmic reticulum membrane</location>
        <topology evidence="35 36 37 38 39">Multi-pass membrane protein</topology>
    </subcellularLocation>
    <subcellularLocation>
        <location evidence="17 25 31 32 33 34 37 38 39">Cell membrane</location>
        <topology evidence="35 36 37 38 39">Multi-pass membrane protein</topology>
    </subcellularLocation>
    <subcellularLocation>
        <location evidence="7">Basolateral cell membrane</location>
    </subcellularLocation>
    <subcellularLocation>
        <location evidence="7">Cytoplasmic vesicle membrane</location>
    </subcellularLocation>
    <subcellularLocation>
        <location evidence="1">Golgi apparatus</location>
    </subcellularLocation>
    <subcellularLocation>
        <location evidence="45">Vesicle</location>
    </subcellularLocation>
    <subcellularLocation>
        <location evidence="45">Secreted</location>
        <location evidence="45">Extracellular exosome</location>
    </subcellularLocation>
    <text evidence="1 17 29 34">PKD2 localization to the plasma and ciliary membranes requires PKD1. PKD1:PKD2 interaction is required to reach the Golgi apparatus form endoplasmic reticulum and then traffic to the cilia (By similarity). Retained in the endoplasmic reticulum by interaction with PACS1 and PACS2 (PubMed:15692563). Detected on kidney tubule basolateral membranes and basal cytoplasmic vesicles (PubMed:10770959). Cell surface and cilium localization requires GANAB (PubMed:27259053). Detected on migrasomes and on extracellular exosomes in urine (PubMed:21406692). Preferentially localized to the dorsal side of immotile cilia (By similarity).</text>
</comment>
<comment type="alternative products">
    <event type="alternative splicing"/>
    <isoform>
        <id>Q13563-1</id>
        <name>1</name>
        <sequence type="displayed"/>
    </isoform>
    <isoform>
        <id>Q13563-2</id>
        <name>2</name>
        <name>delta6</name>
        <sequence type="described" ref="VSP_042479 VSP_042480"/>
    </isoform>
    <isoform>
        <id>Q13563-3</id>
        <name>3</name>
        <name>delta7</name>
        <sequence type="described" ref="VSP_042481"/>
    </isoform>
    <isoform>
        <id>Q13563-4</id>
        <name>4</name>
        <name>delta9</name>
        <sequence type="described" ref="VSP_042482 VSP_042483"/>
    </isoform>
    <isoform>
        <id>Q13563-5</id>
        <name>5</name>
        <name>delta12/13</name>
        <sequence type="described" ref="VSP_042484"/>
    </isoform>
</comment>
<comment type="tissue specificity">
    <text evidence="7 31 48">Detected in fetal and adult kidney (PubMed:10770959). Detected at the thick ascending limb of the loop of Henle, at distal tubules, including the distal convoluted tubule and cortical collecting tubules, with weak staining of the collecting duct (PubMed:10770959). Detected on placenta syncytiotrophoblasts (at protein level) (PubMed:26269590). Strongly expressed in ovary, fetal and adult kidney, testis, and small intestine. Not detected in peripheral leukocytes.</text>
</comment>
<comment type="PTM">
    <text evidence="17 19 27 31">Phosphorylated. Phosphorylation is important for protein function; a mutant that lacks the N-terminal phosphorylation sites cannot complement a zebrafish pkd2-deficient mutant (PubMed:16551655). PKD-mediated phosphorylation at the C-terminus regulates its function in the release of Ca(2+) stores from the endoplasmic reticulum (PubMed:20881056). Phosphorylation at Ser-812 regulates PKD2 trafficking (PubMed:15692563). Phosphorylation at Ser-76 is required for PKD2 trafficking to or retention at the lateral plasma membrane (PubMed:16551655). Phosphorylation at Ser-801, Ser-812 and Ser-829 regulates PKD2 channel activity (PubMed:20881056, PubMed:26269590).</text>
</comment>
<comment type="PTM">
    <text evidence="37">N-glycosylated. The four subunits in a tetramer probably differ in the extent of glycosylation; simultaneous glycosylation of all experimentally validated sites would probably create steric hindrance. Thus, glycosylation at Asn-305 is not compatible with glycosylation at Asn-328; only one of these two residues is glycosylated at a given time.</text>
</comment>
<comment type="PTM">
    <text evidence="1">Sumoylated by SUMO1; sumoylation regulates PKD2 membrane recycling and is necessary for intravascular pressure-induced arterial contractility.</text>
</comment>
<comment type="disease" evidence="4 5 8 10 11 13 15 18 28 32 33 38 47 49">
    <disease id="DI-00926">
        <name>Polycystic kidney disease 2 with or without polycystic liver disease</name>
        <acronym>PKD2</acronym>
        <description>An autosomal dominant disorder characterized by progressive formation and enlargement of cysts in both kidneys, typically leading to end-stage renal disease in adult life. Cysts also occurs in the liver and other organs. It represents approximately 15% of the cases of autosomal dominant polycystic kidney disease. PKD2 is clinically milder than PKD1 but it has a deleterious impact on overall life expectancy.</description>
        <dbReference type="MIM" id="613095"/>
    </disease>
    <text>The disease is caused by variants affecting the gene represented in this entry.</text>
</comment>
<comment type="miscellaneous">
    <molecule>Isoform 5</molecule>
    <text evidence="53">Minor isoform.</text>
</comment>
<comment type="similarity">
    <text evidence="53">Belongs to the polycystin family.</text>
</comment>
<comment type="caution">
    <text evidence="33 35">A study shown that cation chamnel activity is activatable by Wnt molecules (PubMed:27214281). However, this finding remains debatable because the agonist role of Wnt molecules has not been reproduced by an other study, that show that, when PKD2 is expressed in either with or without PKD1, no significant whole-cell current is activated by Wnt proteins (PubMed:27768895).</text>
</comment>
<comment type="online information" name="Functional Glycomics Gateway - Glycan Binding">
    <link uri="http://www.functionalglycomics.org/glycomics/GBPServlet?&amp;operationType=view&amp;cbpId=cbp_hum_Ctlect_205"/>
    <text>Polycystin 2 - Not a C-type lectin</text>
</comment>
<dbReference type="EMBL" id="U50928">
    <property type="protein sequence ID" value="AAC50520.1"/>
    <property type="molecule type" value="mRNA"/>
</dbReference>
<dbReference type="EMBL" id="AF004873">
    <property type="protein sequence ID" value="AAC16004.1"/>
    <property type="molecule type" value="Genomic_DNA"/>
</dbReference>
<dbReference type="EMBL" id="AF004859">
    <property type="protein sequence ID" value="AAC16004.1"/>
    <property type="status" value="JOINED"/>
    <property type="molecule type" value="Genomic_DNA"/>
</dbReference>
<dbReference type="EMBL" id="AF004860">
    <property type="protein sequence ID" value="AAC16004.1"/>
    <property type="status" value="JOINED"/>
    <property type="molecule type" value="Genomic_DNA"/>
</dbReference>
<dbReference type="EMBL" id="AF004861">
    <property type="protein sequence ID" value="AAC16004.1"/>
    <property type="status" value="JOINED"/>
    <property type="molecule type" value="Genomic_DNA"/>
</dbReference>
<dbReference type="EMBL" id="AF004862">
    <property type="protein sequence ID" value="AAC16004.1"/>
    <property type="status" value="JOINED"/>
    <property type="molecule type" value="Genomic_DNA"/>
</dbReference>
<dbReference type="EMBL" id="AF004863">
    <property type="protein sequence ID" value="AAC16004.1"/>
    <property type="status" value="JOINED"/>
    <property type="molecule type" value="Genomic_DNA"/>
</dbReference>
<dbReference type="EMBL" id="AF004864">
    <property type="protein sequence ID" value="AAC16004.1"/>
    <property type="status" value="JOINED"/>
    <property type="molecule type" value="Genomic_DNA"/>
</dbReference>
<dbReference type="EMBL" id="AF004865">
    <property type="protein sequence ID" value="AAC16004.1"/>
    <property type="status" value="JOINED"/>
    <property type="molecule type" value="Genomic_DNA"/>
</dbReference>
<dbReference type="EMBL" id="AF004866">
    <property type="protein sequence ID" value="AAC16004.1"/>
    <property type="status" value="JOINED"/>
    <property type="molecule type" value="Genomic_DNA"/>
</dbReference>
<dbReference type="EMBL" id="AF004867">
    <property type="protein sequence ID" value="AAC16004.1"/>
    <property type="status" value="JOINED"/>
    <property type="molecule type" value="Genomic_DNA"/>
</dbReference>
<dbReference type="EMBL" id="AF004868">
    <property type="protein sequence ID" value="AAC16004.1"/>
    <property type="status" value="JOINED"/>
    <property type="molecule type" value="Genomic_DNA"/>
</dbReference>
<dbReference type="EMBL" id="AF004869">
    <property type="protein sequence ID" value="AAC16004.1"/>
    <property type="status" value="JOINED"/>
    <property type="molecule type" value="Genomic_DNA"/>
</dbReference>
<dbReference type="EMBL" id="AF004870">
    <property type="protein sequence ID" value="AAC16004.1"/>
    <property type="status" value="JOINED"/>
    <property type="molecule type" value="Genomic_DNA"/>
</dbReference>
<dbReference type="EMBL" id="AF004871">
    <property type="protein sequence ID" value="AAC16004.1"/>
    <property type="status" value="JOINED"/>
    <property type="molecule type" value="Genomic_DNA"/>
</dbReference>
<dbReference type="EMBL" id="AF004872">
    <property type="protein sequence ID" value="AAC16004.1"/>
    <property type="status" value="JOINED"/>
    <property type="molecule type" value="Genomic_DNA"/>
</dbReference>
<dbReference type="EMBL" id="BC112261">
    <property type="protein sequence ID" value="AAI12262.1"/>
    <property type="molecule type" value="mRNA"/>
</dbReference>
<dbReference type="EMBL" id="BC112263">
    <property type="protein sequence ID" value="AAI12264.1"/>
    <property type="molecule type" value="mRNA"/>
</dbReference>
<dbReference type="EMBL" id="U56813">
    <property type="protein sequence ID" value="AAC50933.1"/>
    <property type="molecule type" value="mRNA"/>
</dbReference>
<dbReference type="CCDS" id="CCDS3627.1">
    <molecule id="Q13563-1"/>
</dbReference>
<dbReference type="PIR" id="G02640">
    <property type="entry name" value="G02640"/>
</dbReference>
<dbReference type="RefSeq" id="NP_000288.1">
    <molecule id="Q13563-1"/>
    <property type="nucleotide sequence ID" value="NM_000297.4"/>
</dbReference>
<dbReference type="PDB" id="2KLD">
    <property type="method" value="NMR"/>
    <property type="chains" value="A=680-796"/>
</dbReference>
<dbReference type="PDB" id="2KLE">
    <property type="method" value="NMR"/>
    <property type="chains" value="A=680-796"/>
</dbReference>
<dbReference type="PDB" id="2KQ6">
    <property type="method" value="NMR"/>
    <property type="chains" value="A=720-797"/>
</dbReference>
<dbReference type="PDB" id="2Y4Q">
    <property type="method" value="NMR"/>
    <property type="chains" value="A=717-792"/>
</dbReference>
<dbReference type="PDB" id="3HRN">
    <property type="method" value="X-ray"/>
    <property type="resolution" value="1.90 A"/>
    <property type="chains" value="A=833-895"/>
</dbReference>
<dbReference type="PDB" id="3HRO">
    <property type="method" value="X-ray"/>
    <property type="resolution" value="1.90 A"/>
    <property type="chains" value="A=833-872"/>
</dbReference>
<dbReference type="PDB" id="5K47">
    <property type="method" value="EM"/>
    <property type="resolution" value="4.20 A"/>
    <property type="chains" value="A/B/C/D=185-723"/>
</dbReference>
<dbReference type="PDB" id="5MKE">
    <property type="method" value="EM"/>
    <property type="resolution" value="4.30 A"/>
    <property type="chains" value="A/B/C/D=1-968"/>
</dbReference>
<dbReference type="PDB" id="5MKF">
    <property type="method" value="EM"/>
    <property type="resolution" value="4.20 A"/>
    <property type="chains" value="A/B/C/D=1-968"/>
</dbReference>
<dbReference type="PDB" id="5T4D">
    <property type="method" value="EM"/>
    <property type="resolution" value="3.00 A"/>
    <property type="chains" value="A/B/C/D=198-702"/>
</dbReference>
<dbReference type="PDB" id="6A70">
    <property type="method" value="EM"/>
    <property type="resolution" value="3.60 A"/>
    <property type="chains" value="A/F/G=185-723"/>
</dbReference>
<dbReference type="PDB" id="6D1W">
    <property type="method" value="EM"/>
    <property type="resolution" value="3.54 A"/>
    <property type="chains" value="A/B/C/D=53-792"/>
</dbReference>
<dbReference type="PDB" id="6T9N">
    <property type="method" value="EM"/>
    <property type="resolution" value="2.96 A"/>
    <property type="chains" value="A/B/C/D=185-723"/>
</dbReference>
<dbReference type="PDB" id="6T9O">
    <property type="method" value="EM"/>
    <property type="resolution" value="3.39 A"/>
    <property type="chains" value="A/B/C/D=185-723"/>
</dbReference>
<dbReference type="PDB" id="6WB8">
    <property type="method" value="EM"/>
    <property type="resolution" value="3.24 A"/>
    <property type="chains" value="A/B/C/D=41-792"/>
</dbReference>
<dbReference type="PDB" id="8HK7">
    <property type="method" value="EM"/>
    <property type="resolution" value="3.00 A"/>
    <property type="chains" value="A/B/C/D=185-719"/>
</dbReference>
<dbReference type="PDB" id="8K3S">
    <property type="method" value="EM"/>
    <property type="resolution" value="3.00 A"/>
    <property type="chains" value="A/B/C/D=185-719"/>
</dbReference>
<dbReference type="PDB" id="9DLI">
    <property type="method" value="EM"/>
    <property type="resolution" value="2.70 A"/>
    <property type="chains" value="A1/A2/A3/A4=53-792"/>
</dbReference>
<dbReference type="PDB" id="9DWQ">
    <property type="method" value="EM"/>
    <property type="resolution" value="2.76 A"/>
    <property type="chains" value="A/B/C/D=53-792"/>
</dbReference>
<dbReference type="PDBsum" id="2KLD"/>
<dbReference type="PDBsum" id="2KLE"/>
<dbReference type="PDBsum" id="2KQ6"/>
<dbReference type="PDBsum" id="2Y4Q"/>
<dbReference type="PDBsum" id="3HRN"/>
<dbReference type="PDBsum" id="3HRO"/>
<dbReference type="PDBsum" id="5K47"/>
<dbReference type="PDBsum" id="5MKE"/>
<dbReference type="PDBsum" id="5MKF"/>
<dbReference type="PDBsum" id="5T4D"/>
<dbReference type="PDBsum" id="6A70"/>
<dbReference type="PDBsum" id="6D1W"/>
<dbReference type="PDBsum" id="6T9N"/>
<dbReference type="PDBsum" id="6T9O"/>
<dbReference type="PDBsum" id="6WB8"/>
<dbReference type="PDBsum" id="8HK7"/>
<dbReference type="PDBsum" id="8K3S"/>
<dbReference type="PDBsum" id="9DLI"/>
<dbReference type="PDBsum" id="9DWQ"/>
<dbReference type="BMRB" id="Q13563"/>
<dbReference type="EMDB" id="EMD-10418"/>
<dbReference type="EMDB" id="EMD-10419"/>
<dbReference type="EMDB" id="EMD-21586"/>
<dbReference type="EMDB" id="EMD-34848"/>
<dbReference type="EMDB" id="EMD-3523"/>
<dbReference type="EMDB" id="EMD-3524"/>
<dbReference type="EMDB" id="EMD-36858"/>
<dbReference type="EMDB" id="EMD-46979"/>
<dbReference type="EMDB" id="EMD-47260"/>
<dbReference type="EMDB" id="EMD-6991"/>
<dbReference type="EMDB" id="EMD-6992"/>
<dbReference type="EMDB" id="EMD-7786"/>
<dbReference type="EMDB" id="EMD-8200"/>
<dbReference type="EMDB" id="EMD-8354"/>
<dbReference type="EMDB" id="EMD-8355"/>
<dbReference type="EMDB" id="EMD-8356"/>
<dbReference type="SMR" id="Q13563"/>
<dbReference type="BioGRID" id="111328">
    <property type="interactions" value="89"/>
</dbReference>
<dbReference type="ComplexPortal" id="CPX-4001">
    <property type="entry name" value="PKD1-PKD2 Polycystin complex"/>
</dbReference>
<dbReference type="CORUM" id="Q13563"/>
<dbReference type="DIP" id="DIP-47455N"/>
<dbReference type="ELM" id="Q13563"/>
<dbReference type="FunCoup" id="Q13563">
    <property type="interactions" value="931"/>
</dbReference>
<dbReference type="IntAct" id="Q13563">
    <property type="interactions" value="75"/>
</dbReference>
<dbReference type="MINT" id="Q13563"/>
<dbReference type="STRING" id="9606.ENSP00000237596"/>
<dbReference type="BindingDB" id="Q13563"/>
<dbReference type="GuidetoPHARMACOLOGY" id="504"/>
<dbReference type="TCDB" id="1.A.5.2.1">
    <property type="family name" value="the polycystin cation channel (pcc) family"/>
</dbReference>
<dbReference type="GlyCosmos" id="Q13563">
    <property type="glycosylation" value="5 sites, No reported glycans"/>
</dbReference>
<dbReference type="GlyGen" id="Q13563">
    <property type="glycosylation" value="7 sites, 9 N-linked glycans (4 sites), 1 O-linked glycan (2 sites)"/>
</dbReference>
<dbReference type="iPTMnet" id="Q13563"/>
<dbReference type="PhosphoSitePlus" id="Q13563"/>
<dbReference type="BioMuta" id="PKD2"/>
<dbReference type="DMDM" id="116242717"/>
<dbReference type="jPOST" id="Q13563"/>
<dbReference type="MassIVE" id="Q13563"/>
<dbReference type="PaxDb" id="9606-ENSP00000237596"/>
<dbReference type="PeptideAtlas" id="Q13563"/>
<dbReference type="ProteomicsDB" id="59562">
    <molecule id="Q13563-1"/>
</dbReference>
<dbReference type="ProteomicsDB" id="59563">
    <molecule id="Q13563-2"/>
</dbReference>
<dbReference type="ProteomicsDB" id="59564">
    <molecule id="Q13563-3"/>
</dbReference>
<dbReference type="ProteomicsDB" id="59565">
    <molecule id="Q13563-4"/>
</dbReference>
<dbReference type="ProteomicsDB" id="59566">
    <molecule id="Q13563-5"/>
</dbReference>
<dbReference type="Antibodypedia" id="3871">
    <property type="antibodies" value="347 antibodies from 35 providers"/>
</dbReference>
<dbReference type="DNASU" id="5311"/>
<dbReference type="Ensembl" id="ENST00000237596.7">
    <molecule id="Q13563-1"/>
    <property type="protein sequence ID" value="ENSP00000237596.2"/>
    <property type="gene ID" value="ENSG00000118762.8"/>
</dbReference>
<dbReference type="GeneID" id="5311"/>
<dbReference type="KEGG" id="hsa:5311"/>
<dbReference type="MANE-Select" id="ENST00000237596.7">
    <property type="protein sequence ID" value="ENSP00000237596.2"/>
    <property type="RefSeq nucleotide sequence ID" value="NM_000297.4"/>
    <property type="RefSeq protein sequence ID" value="NP_000288.1"/>
</dbReference>
<dbReference type="UCSC" id="uc003hre.4">
    <molecule id="Q13563-1"/>
    <property type="organism name" value="human"/>
</dbReference>
<dbReference type="AGR" id="HGNC:9009"/>
<dbReference type="CTD" id="5311"/>
<dbReference type="DisGeNET" id="5311"/>
<dbReference type="GeneCards" id="PKD2"/>
<dbReference type="GeneReviews" id="PKD2"/>
<dbReference type="HGNC" id="HGNC:9009">
    <property type="gene designation" value="PKD2"/>
</dbReference>
<dbReference type="HPA" id="ENSG00000118762">
    <property type="expression patterns" value="Low tissue specificity"/>
</dbReference>
<dbReference type="MalaCards" id="PKD2"/>
<dbReference type="MIM" id="173910">
    <property type="type" value="gene"/>
</dbReference>
<dbReference type="MIM" id="613095">
    <property type="type" value="phenotype"/>
</dbReference>
<dbReference type="neXtProt" id="NX_Q13563"/>
<dbReference type="OpenTargets" id="ENSG00000118762"/>
<dbReference type="Orphanet" id="730">
    <property type="disease" value="Autosomal dominant polycystic kidney disease"/>
</dbReference>
<dbReference type="PharmGKB" id="PA33343"/>
<dbReference type="VEuPathDB" id="HostDB:ENSG00000118762"/>
<dbReference type="eggNOG" id="KOG3599">
    <property type="taxonomic scope" value="Eukaryota"/>
</dbReference>
<dbReference type="GeneTree" id="ENSGT00940000159025"/>
<dbReference type="HOGENOM" id="CLU_012097_0_0_1"/>
<dbReference type="InParanoid" id="Q13563"/>
<dbReference type="OMA" id="RHEHRSC"/>
<dbReference type="OrthoDB" id="444119at2759"/>
<dbReference type="PAN-GO" id="Q13563">
    <property type="GO annotations" value="10 GO annotations based on evolutionary models"/>
</dbReference>
<dbReference type="PhylomeDB" id="Q13563"/>
<dbReference type="TreeFam" id="TF316484"/>
<dbReference type="PathwayCommons" id="Q13563"/>
<dbReference type="Reactome" id="R-HSA-5620916">
    <property type="pathway name" value="VxPx cargo-targeting to cilium"/>
</dbReference>
<dbReference type="SignaLink" id="Q13563"/>
<dbReference type="SIGNOR" id="Q13563"/>
<dbReference type="BioGRID-ORCS" id="5311">
    <property type="hits" value="8 hits in 1152 CRISPR screens"/>
</dbReference>
<dbReference type="ChiTaRS" id="PKD2">
    <property type="organism name" value="human"/>
</dbReference>
<dbReference type="EvolutionaryTrace" id="Q13563"/>
<dbReference type="GeneWiki" id="Polycystic_kidney_disease_2"/>
<dbReference type="GenomeRNAi" id="5311"/>
<dbReference type="Pharos" id="Q13563">
    <property type="development level" value="Tchem"/>
</dbReference>
<dbReference type="PRO" id="PR:Q13563"/>
<dbReference type="Proteomes" id="UP000005640">
    <property type="component" value="Chromosome 4"/>
</dbReference>
<dbReference type="RNAct" id="Q13563">
    <property type="molecule type" value="protein"/>
</dbReference>
<dbReference type="Bgee" id="ENSG00000118762">
    <property type="expression patterns" value="Expressed in blood vessel layer and 208 other cell types or tissues"/>
</dbReference>
<dbReference type="ExpressionAtlas" id="Q13563">
    <property type="expression patterns" value="baseline and differential"/>
</dbReference>
<dbReference type="GO" id="GO:0045180">
    <property type="term" value="C:basal cortex"/>
    <property type="evidence" value="ECO:0000314"/>
    <property type="project" value="BHF-UCL"/>
</dbReference>
<dbReference type="GO" id="GO:0009925">
    <property type="term" value="C:basal plasma membrane"/>
    <property type="evidence" value="ECO:0000314"/>
    <property type="project" value="BHF-UCL"/>
</dbReference>
<dbReference type="GO" id="GO:0016323">
    <property type="term" value="C:basolateral plasma membrane"/>
    <property type="evidence" value="ECO:0007669"/>
    <property type="project" value="UniProtKB-SubCell"/>
</dbReference>
<dbReference type="GO" id="GO:0034703">
    <property type="term" value="C:cation channel complex"/>
    <property type="evidence" value="ECO:0000314"/>
    <property type="project" value="UniProtKB"/>
</dbReference>
<dbReference type="GO" id="GO:0005911">
    <property type="term" value="C:cell-cell junction"/>
    <property type="evidence" value="ECO:0007669"/>
    <property type="project" value="Ensembl"/>
</dbReference>
<dbReference type="GO" id="GO:0036064">
    <property type="term" value="C:ciliary basal body"/>
    <property type="evidence" value="ECO:0000314"/>
    <property type="project" value="MGI"/>
</dbReference>
<dbReference type="GO" id="GO:0060170">
    <property type="term" value="C:ciliary membrane"/>
    <property type="evidence" value="ECO:0007669"/>
    <property type="project" value="UniProtKB-SubCell"/>
</dbReference>
<dbReference type="GO" id="GO:0005929">
    <property type="term" value="C:cilium"/>
    <property type="evidence" value="ECO:0000314"/>
    <property type="project" value="MGI"/>
</dbReference>
<dbReference type="GO" id="GO:0005737">
    <property type="term" value="C:cytoplasm"/>
    <property type="evidence" value="ECO:0000314"/>
    <property type="project" value="BHF-UCL"/>
</dbReference>
<dbReference type="GO" id="GO:0098554">
    <property type="term" value="C:cytoplasmic side of endoplasmic reticulum membrane"/>
    <property type="evidence" value="ECO:0000314"/>
    <property type="project" value="BHF-UCL"/>
</dbReference>
<dbReference type="GO" id="GO:0030659">
    <property type="term" value="C:cytoplasmic vesicle membrane"/>
    <property type="evidence" value="ECO:0007669"/>
    <property type="project" value="UniProtKB-SubCell"/>
</dbReference>
<dbReference type="GO" id="GO:0005829">
    <property type="term" value="C:cytosol"/>
    <property type="evidence" value="ECO:0000314"/>
    <property type="project" value="HPA"/>
</dbReference>
<dbReference type="GO" id="GO:0005783">
    <property type="term" value="C:endoplasmic reticulum"/>
    <property type="evidence" value="ECO:0000314"/>
    <property type="project" value="HPA"/>
</dbReference>
<dbReference type="GO" id="GO:0005789">
    <property type="term" value="C:endoplasmic reticulum membrane"/>
    <property type="evidence" value="ECO:0000314"/>
    <property type="project" value="BHF-UCL"/>
</dbReference>
<dbReference type="GO" id="GO:0070062">
    <property type="term" value="C:extracellular exosome"/>
    <property type="evidence" value="ECO:0000314"/>
    <property type="project" value="UniProtKB"/>
</dbReference>
<dbReference type="GO" id="GO:0005794">
    <property type="term" value="C:Golgi apparatus"/>
    <property type="evidence" value="ECO:0000250"/>
    <property type="project" value="UniProtKB"/>
</dbReference>
<dbReference type="GO" id="GO:0030027">
    <property type="term" value="C:lamellipodium"/>
    <property type="evidence" value="ECO:0000314"/>
    <property type="project" value="BHF-UCL"/>
</dbReference>
<dbReference type="GO" id="GO:0098553">
    <property type="term" value="C:lumenal side of endoplasmic reticulum membrane"/>
    <property type="evidence" value="ECO:0000314"/>
    <property type="project" value="BHF-UCL"/>
</dbReference>
<dbReference type="GO" id="GO:0016020">
    <property type="term" value="C:membrane"/>
    <property type="evidence" value="ECO:0000314"/>
    <property type="project" value="ComplexPortal"/>
</dbReference>
<dbReference type="GO" id="GO:0140494">
    <property type="term" value="C:migrasome"/>
    <property type="evidence" value="ECO:0000314"/>
    <property type="project" value="UniProtKB"/>
</dbReference>
<dbReference type="GO" id="GO:0072686">
    <property type="term" value="C:mitotic spindle"/>
    <property type="evidence" value="ECO:0000314"/>
    <property type="project" value="BHF-UCL"/>
</dbReference>
<dbReference type="GO" id="GO:0031514">
    <property type="term" value="C:motile cilium"/>
    <property type="evidence" value="ECO:0000250"/>
    <property type="project" value="BHF-UCL"/>
</dbReference>
<dbReference type="GO" id="GO:0097730">
    <property type="term" value="C:non-motile cilium"/>
    <property type="evidence" value="ECO:0000250"/>
    <property type="project" value="BHF-UCL"/>
</dbReference>
<dbReference type="GO" id="GO:0005886">
    <property type="term" value="C:plasma membrane"/>
    <property type="evidence" value="ECO:0000314"/>
    <property type="project" value="HPA"/>
</dbReference>
<dbReference type="GO" id="GO:0002133">
    <property type="term" value="C:polycystin complex"/>
    <property type="evidence" value="ECO:0000353"/>
    <property type="project" value="ComplexPortal"/>
</dbReference>
<dbReference type="GO" id="GO:0042805">
    <property type="term" value="F:actinin binding"/>
    <property type="evidence" value="ECO:0000314"/>
    <property type="project" value="BHF-UCL"/>
</dbReference>
<dbReference type="GO" id="GO:0051117">
    <property type="term" value="F:ATPase binding"/>
    <property type="evidence" value="ECO:0000250"/>
    <property type="project" value="BHF-UCL"/>
</dbReference>
<dbReference type="GO" id="GO:0005509">
    <property type="term" value="F:calcium ion binding"/>
    <property type="evidence" value="ECO:0000314"/>
    <property type="project" value="UniProtKB"/>
</dbReference>
<dbReference type="GO" id="GO:0048763">
    <property type="term" value="F:calcium-induced calcium release activity"/>
    <property type="evidence" value="ECO:0000314"/>
    <property type="project" value="BHF-UCL"/>
</dbReference>
<dbReference type="GO" id="GO:0008092">
    <property type="term" value="F:cytoskeletal protein binding"/>
    <property type="evidence" value="ECO:0000314"/>
    <property type="project" value="BHF-UCL"/>
</dbReference>
<dbReference type="GO" id="GO:0043398">
    <property type="term" value="F:HLH domain binding"/>
    <property type="evidence" value="ECO:0000353"/>
    <property type="project" value="BHF-UCL"/>
</dbReference>
<dbReference type="GO" id="GO:0042802">
    <property type="term" value="F:identical protein binding"/>
    <property type="evidence" value="ECO:0000353"/>
    <property type="project" value="IntAct"/>
</dbReference>
<dbReference type="GO" id="GO:0005261">
    <property type="term" value="F:monoatomic cation channel activity"/>
    <property type="evidence" value="ECO:0000315"/>
    <property type="project" value="UniProtKB"/>
</dbReference>
<dbReference type="GO" id="GO:0051371">
    <property type="term" value="F:muscle alpha-actinin binding"/>
    <property type="evidence" value="ECO:0000318"/>
    <property type="project" value="GO_Central"/>
</dbReference>
<dbReference type="GO" id="GO:0015271">
    <property type="term" value="F:outward rectifier potassium channel activity"/>
    <property type="evidence" value="ECO:0000250"/>
    <property type="project" value="UniProtKB"/>
</dbReference>
<dbReference type="GO" id="GO:0051219">
    <property type="term" value="F:phosphoprotein binding"/>
    <property type="evidence" value="ECO:0000353"/>
    <property type="project" value="UniProtKB"/>
</dbReference>
<dbReference type="GO" id="GO:0005267">
    <property type="term" value="F:potassium channel activity"/>
    <property type="evidence" value="ECO:0000314"/>
    <property type="project" value="UniProtKB"/>
</dbReference>
<dbReference type="GO" id="GO:0042803">
    <property type="term" value="F:protein homodimerization activity"/>
    <property type="evidence" value="ECO:0000314"/>
    <property type="project" value="UniProtKB"/>
</dbReference>
<dbReference type="GO" id="GO:0005102">
    <property type="term" value="F:signaling receptor binding"/>
    <property type="evidence" value="ECO:0000353"/>
    <property type="project" value="BHF-UCL"/>
</dbReference>
<dbReference type="GO" id="GO:0140416">
    <property type="term" value="F:transcription regulator inhibitor activity"/>
    <property type="evidence" value="ECO:0000353"/>
    <property type="project" value="BHF-UCL"/>
</dbReference>
<dbReference type="GO" id="GO:0044325">
    <property type="term" value="F:transmembrane transporter binding"/>
    <property type="evidence" value="ECO:0000353"/>
    <property type="project" value="BHF-UCL"/>
</dbReference>
<dbReference type="GO" id="GO:0005245">
    <property type="term" value="F:voltage-gated calcium channel activity"/>
    <property type="evidence" value="ECO:0000314"/>
    <property type="project" value="BHF-UCL"/>
</dbReference>
<dbReference type="GO" id="GO:0022843">
    <property type="term" value="F:voltage-gated monoatomic cation channel activity"/>
    <property type="evidence" value="ECO:0000314"/>
    <property type="project" value="BHF-UCL"/>
</dbReference>
<dbReference type="GO" id="GO:0005244">
    <property type="term" value="F:voltage-gated monoatomic ion channel activity"/>
    <property type="evidence" value="ECO:0000314"/>
    <property type="project" value="BHF-UCL"/>
</dbReference>
<dbReference type="GO" id="GO:0005249">
    <property type="term" value="F:voltage-gated potassium channel activity"/>
    <property type="evidence" value="ECO:0000315"/>
    <property type="project" value="UniProtKB"/>
</dbReference>
<dbReference type="GO" id="GO:0005248">
    <property type="term" value="F:voltage-gated sodium channel activity"/>
    <property type="evidence" value="ECO:0000314"/>
    <property type="project" value="BHF-UCL"/>
</dbReference>
<dbReference type="GO" id="GO:0035904">
    <property type="term" value="P:aorta development"/>
    <property type="evidence" value="ECO:0000270"/>
    <property type="project" value="UniProtKB"/>
</dbReference>
<dbReference type="GO" id="GO:0001658">
    <property type="term" value="P:branching involved in ureteric bud morphogenesis"/>
    <property type="evidence" value="ECO:0000270"/>
    <property type="project" value="UniProtKB"/>
</dbReference>
<dbReference type="GO" id="GO:0070588">
    <property type="term" value="P:calcium ion transmembrane transport"/>
    <property type="evidence" value="ECO:0000314"/>
    <property type="project" value="BHF-UCL"/>
</dbReference>
<dbReference type="GO" id="GO:0006816">
    <property type="term" value="P:calcium ion transport"/>
    <property type="evidence" value="ECO:0000314"/>
    <property type="project" value="BHF-UCL"/>
</dbReference>
<dbReference type="GO" id="GO:0007166">
    <property type="term" value="P:cell surface receptor signaling pathway"/>
    <property type="evidence" value="ECO:0000314"/>
    <property type="project" value="UniProtKB"/>
</dbReference>
<dbReference type="GO" id="GO:0007259">
    <property type="term" value="P:cell surface receptor signaling pathway via JAK-STAT"/>
    <property type="evidence" value="ECO:0000250"/>
    <property type="project" value="BHF-UCL"/>
</dbReference>
<dbReference type="GO" id="GO:0071277">
    <property type="term" value="P:cellular response to calcium ion"/>
    <property type="evidence" value="ECO:0000250"/>
    <property type="project" value="UniProtKB"/>
</dbReference>
<dbReference type="GO" id="GO:0071320">
    <property type="term" value="P:cellular response to cAMP"/>
    <property type="evidence" value="ECO:0000315"/>
    <property type="project" value="UniProtKB"/>
</dbReference>
<dbReference type="GO" id="GO:0071498">
    <property type="term" value="P:cellular response to fluid shear stress"/>
    <property type="evidence" value="ECO:0000315"/>
    <property type="project" value="BHF-UCL"/>
</dbReference>
<dbReference type="GO" id="GO:0071464">
    <property type="term" value="P:cellular response to hydrostatic pressure"/>
    <property type="evidence" value="ECO:0000314"/>
    <property type="project" value="BHF-UCL"/>
</dbReference>
<dbReference type="GO" id="GO:0071470">
    <property type="term" value="P:cellular response to osmotic stress"/>
    <property type="evidence" value="ECO:0000314"/>
    <property type="project" value="BHF-UCL"/>
</dbReference>
<dbReference type="GO" id="GO:0034614">
    <property type="term" value="P:cellular response to reactive oxygen species"/>
    <property type="evidence" value="ECO:0000303"/>
    <property type="project" value="BHF-UCL"/>
</dbReference>
<dbReference type="GO" id="GO:0051298">
    <property type="term" value="P:centrosome duplication"/>
    <property type="evidence" value="ECO:0000303"/>
    <property type="project" value="BHF-UCL"/>
</dbReference>
<dbReference type="GO" id="GO:0044782">
    <property type="term" value="P:cilium organization"/>
    <property type="evidence" value="ECO:0000315"/>
    <property type="project" value="MGI"/>
</dbReference>
<dbReference type="GO" id="GO:0050982">
    <property type="term" value="P:detection of mechanical stimulus"/>
    <property type="evidence" value="ECO:0000250"/>
    <property type="project" value="BHF-UCL"/>
</dbReference>
<dbReference type="GO" id="GO:0003127">
    <property type="term" value="P:detection of nodal flow"/>
    <property type="evidence" value="ECO:0000250"/>
    <property type="project" value="BHF-UCL"/>
</dbReference>
<dbReference type="GO" id="GO:0007368">
    <property type="term" value="P:determination of left/right symmetry"/>
    <property type="evidence" value="ECO:0000250"/>
    <property type="project" value="BHF-UCL"/>
</dbReference>
<dbReference type="GO" id="GO:0071910">
    <property type="term" value="P:determination of liver left/right asymmetry"/>
    <property type="evidence" value="ECO:0000315"/>
    <property type="project" value="BHF-UCL"/>
</dbReference>
<dbReference type="GO" id="GO:0001892">
    <property type="term" value="P:embryonic placenta development"/>
    <property type="evidence" value="ECO:0000250"/>
    <property type="project" value="BHF-UCL"/>
</dbReference>
<dbReference type="GO" id="GO:0051649">
    <property type="term" value="P:establishment of localization in cell"/>
    <property type="evidence" value="ECO:0007669"/>
    <property type="project" value="Ensembl"/>
</dbReference>
<dbReference type="GO" id="GO:0007507">
    <property type="term" value="P:heart development"/>
    <property type="evidence" value="ECO:0000270"/>
    <property type="project" value="UniProtKB"/>
</dbReference>
<dbReference type="GO" id="GO:0001947">
    <property type="term" value="P:heart looping"/>
    <property type="evidence" value="ECO:0000315"/>
    <property type="project" value="BHF-UCL"/>
</dbReference>
<dbReference type="GO" id="GO:0098662">
    <property type="term" value="P:inorganic cation transmembrane transport"/>
    <property type="evidence" value="ECO:0000315"/>
    <property type="project" value="UniProtKB"/>
</dbReference>
<dbReference type="GO" id="GO:0006874">
    <property type="term" value="P:intracellular calcium ion homeostasis"/>
    <property type="evidence" value="ECO:0007669"/>
    <property type="project" value="Ensembl"/>
</dbReference>
<dbReference type="GO" id="GO:0001889">
    <property type="term" value="P:liver development"/>
    <property type="evidence" value="ECO:0000270"/>
    <property type="project" value="UniProtKB"/>
</dbReference>
<dbReference type="GO" id="GO:0072177">
    <property type="term" value="P:mesonephric duct development"/>
    <property type="evidence" value="ECO:0000270"/>
    <property type="project" value="UniProtKB"/>
</dbReference>
<dbReference type="GO" id="GO:0072164">
    <property type="term" value="P:mesonephric tubule development"/>
    <property type="evidence" value="ECO:0000270"/>
    <property type="project" value="UniProtKB"/>
</dbReference>
<dbReference type="GO" id="GO:0072218">
    <property type="term" value="P:metanephric ascending thin limb development"/>
    <property type="evidence" value="ECO:0000270"/>
    <property type="project" value="UniProtKB"/>
</dbReference>
<dbReference type="GO" id="GO:0072214">
    <property type="term" value="P:metanephric cortex development"/>
    <property type="evidence" value="ECO:0000270"/>
    <property type="project" value="UniProtKB"/>
</dbReference>
<dbReference type="GO" id="GO:0072219">
    <property type="term" value="P:metanephric cortical collecting duct development"/>
    <property type="evidence" value="ECO:0000270"/>
    <property type="project" value="UniProtKB"/>
</dbReference>
<dbReference type="GO" id="GO:0072235">
    <property type="term" value="P:metanephric distal tubule development"/>
    <property type="evidence" value="ECO:0000270"/>
    <property type="project" value="UniProtKB"/>
</dbReference>
<dbReference type="GO" id="GO:0072075">
    <property type="term" value="P:metanephric mesenchyme development"/>
    <property type="evidence" value="ECO:0000270"/>
    <property type="project" value="UniProtKB"/>
</dbReference>
<dbReference type="GO" id="GO:0035502">
    <property type="term" value="P:metanephric part of ureteric bud development"/>
    <property type="evidence" value="ECO:0000270"/>
    <property type="project" value="UniProtKB"/>
</dbReference>
<dbReference type="GO" id="GO:0072284">
    <property type="term" value="P:metanephric S-shaped body morphogenesis"/>
    <property type="evidence" value="ECO:0000270"/>
    <property type="project" value="UniProtKB"/>
</dbReference>
<dbReference type="GO" id="GO:0072208">
    <property type="term" value="P:metanephric smooth muscle tissue development"/>
    <property type="evidence" value="ECO:0000270"/>
    <property type="project" value="UniProtKB"/>
</dbReference>
<dbReference type="GO" id="GO:0008285">
    <property type="term" value="P:negative regulation of cell population proliferation"/>
    <property type="evidence" value="ECO:0000303"/>
    <property type="project" value="BHF-UCL"/>
</dbReference>
<dbReference type="GO" id="GO:2000134">
    <property type="term" value="P:negative regulation of G1/S transition of mitotic cell cycle"/>
    <property type="evidence" value="ECO:0000315"/>
    <property type="project" value="BHF-UCL"/>
</dbReference>
<dbReference type="GO" id="GO:0021915">
    <property type="term" value="P:neural tube development"/>
    <property type="evidence" value="ECO:0000270"/>
    <property type="project" value="UniProtKB"/>
</dbReference>
<dbReference type="GO" id="GO:0060674">
    <property type="term" value="P:placenta blood vessel development"/>
    <property type="evidence" value="ECO:0000250"/>
    <property type="project" value="BHF-UCL"/>
</dbReference>
<dbReference type="GO" id="GO:0010628">
    <property type="term" value="P:positive regulation of gene expression"/>
    <property type="evidence" value="ECO:0007669"/>
    <property type="project" value="Ensembl"/>
</dbReference>
<dbReference type="GO" id="GO:0045429">
    <property type="term" value="P:positive regulation of nitric oxide biosynthetic process"/>
    <property type="evidence" value="ECO:0000315"/>
    <property type="project" value="BHF-UCL"/>
</dbReference>
<dbReference type="GO" id="GO:1900738">
    <property type="term" value="P:positive regulation of phospholipase C-activating G protein-coupled receptor signaling pathway"/>
    <property type="evidence" value="ECO:0000315"/>
    <property type="project" value="BHF-UCL"/>
</dbReference>
<dbReference type="GO" id="GO:0045944">
    <property type="term" value="P:positive regulation of transcription by RNA polymerase II"/>
    <property type="evidence" value="ECO:0000314"/>
    <property type="project" value="BHF-UCL"/>
</dbReference>
<dbReference type="GO" id="GO:0071805">
    <property type="term" value="P:potassium ion transmembrane transport"/>
    <property type="evidence" value="ECO:0000314"/>
    <property type="project" value="UniProtKB"/>
</dbReference>
<dbReference type="GO" id="GO:0051290">
    <property type="term" value="P:protein heterotetramerization"/>
    <property type="evidence" value="ECO:0000314"/>
    <property type="project" value="UniProtKB"/>
</dbReference>
<dbReference type="GO" id="GO:0051289">
    <property type="term" value="P:protein homotetramerization"/>
    <property type="evidence" value="ECO:0000314"/>
    <property type="project" value="UniProtKB"/>
</dbReference>
<dbReference type="GO" id="GO:0051262">
    <property type="term" value="P:protein tetramerization"/>
    <property type="evidence" value="ECO:0000314"/>
    <property type="project" value="UniProtKB"/>
</dbReference>
<dbReference type="GO" id="GO:0090279">
    <property type="term" value="P:regulation of calcium ion import"/>
    <property type="evidence" value="ECO:0000314"/>
    <property type="project" value="BHF-UCL"/>
</dbReference>
<dbReference type="GO" id="GO:0051726">
    <property type="term" value="P:regulation of cell cycle"/>
    <property type="evidence" value="ECO:0000250"/>
    <property type="project" value="BHF-UCL"/>
</dbReference>
<dbReference type="GO" id="GO:0042127">
    <property type="term" value="P:regulation of cell population proliferation"/>
    <property type="evidence" value="ECO:0000315"/>
    <property type="project" value="BHF-UCL"/>
</dbReference>
<dbReference type="GO" id="GO:0051209">
    <property type="term" value="P:release of sequestered calcium ion into cytosol"/>
    <property type="evidence" value="ECO:0000314"/>
    <property type="project" value="BHF-UCL"/>
</dbReference>
<dbReference type="GO" id="GO:0061441">
    <property type="term" value="P:renal artery morphogenesis"/>
    <property type="evidence" value="ECO:0000270"/>
    <property type="project" value="UniProtKB"/>
</dbReference>
<dbReference type="GO" id="GO:0061333">
    <property type="term" value="P:renal tubule morphogenesis"/>
    <property type="evidence" value="ECO:0000250"/>
    <property type="project" value="BHF-UCL"/>
</dbReference>
<dbReference type="GO" id="GO:0035725">
    <property type="term" value="P:sodium ion transmembrane transport"/>
    <property type="evidence" value="ECO:0000314"/>
    <property type="project" value="BHF-UCL"/>
</dbReference>
<dbReference type="GO" id="GO:0021510">
    <property type="term" value="P:spinal cord development"/>
    <property type="evidence" value="ECO:0000270"/>
    <property type="project" value="UniProtKB"/>
</dbReference>
<dbReference type="GO" id="GO:0016055">
    <property type="term" value="P:Wnt signaling pathway"/>
    <property type="evidence" value="ECO:0000314"/>
    <property type="project" value="ComplexPortal"/>
</dbReference>
<dbReference type="DisProt" id="DP02758"/>
<dbReference type="FunFam" id="1.20.120.350:FF:000080">
    <property type="entry name" value="Polycystic kidney disease 2"/>
    <property type="match status" value="1"/>
</dbReference>
<dbReference type="FunFam" id="1.10.287.70:FF:000055">
    <property type="entry name" value="Polycystic kidney disease 2-like 1"/>
    <property type="match status" value="1"/>
</dbReference>
<dbReference type="FunFam" id="1.10.238.10:FF:000228">
    <property type="entry name" value="polycystin-2 isoform X1"/>
    <property type="match status" value="1"/>
</dbReference>
<dbReference type="FunFam" id="1.20.5.340:FF:000020">
    <property type="entry name" value="polycystin-2 isoform X1"/>
    <property type="match status" value="1"/>
</dbReference>
<dbReference type="Gene3D" id="1.10.287.70">
    <property type="match status" value="1"/>
</dbReference>
<dbReference type="Gene3D" id="1.20.5.340">
    <property type="match status" value="1"/>
</dbReference>
<dbReference type="Gene3D" id="1.10.238.10">
    <property type="entry name" value="EF-hand"/>
    <property type="match status" value="1"/>
</dbReference>
<dbReference type="Gene3D" id="1.20.120.350">
    <property type="entry name" value="Voltage-gated potassium channels. Chain C"/>
    <property type="match status" value="1"/>
</dbReference>
<dbReference type="InterPro" id="IPR011992">
    <property type="entry name" value="EF-hand-dom_pair"/>
</dbReference>
<dbReference type="InterPro" id="IPR002048">
    <property type="entry name" value="EF_hand_dom"/>
</dbReference>
<dbReference type="InterPro" id="IPR013122">
    <property type="entry name" value="PKD1_2_channel"/>
</dbReference>
<dbReference type="InterPro" id="IPR003915">
    <property type="entry name" value="PKD_2"/>
</dbReference>
<dbReference type="InterPro" id="IPR051223">
    <property type="entry name" value="Polycystin"/>
</dbReference>
<dbReference type="InterPro" id="IPR046791">
    <property type="entry name" value="Polycystin_dom"/>
</dbReference>
<dbReference type="InterPro" id="IPR027359">
    <property type="entry name" value="Volt_channel_dom_sf"/>
</dbReference>
<dbReference type="PANTHER" id="PTHR10877">
    <property type="entry name" value="POLYCYSTIN FAMILY MEMBER"/>
    <property type="match status" value="1"/>
</dbReference>
<dbReference type="PANTHER" id="PTHR10877:SF114">
    <property type="entry name" value="POLYCYSTIN-2"/>
    <property type="match status" value="1"/>
</dbReference>
<dbReference type="Pfam" id="PF18109">
    <property type="entry name" value="Fer4_24"/>
    <property type="match status" value="1"/>
</dbReference>
<dbReference type="Pfam" id="PF08016">
    <property type="entry name" value="PKD_channel"/>
    <property type="match status" value="1"/>
</dbReference>
<dbReference type="Pfam" id="PF20519">
    <property type="entry name" value="Polycystin_dom"/>
    <property type="match status" value="1"/>
</dbReference>
<dbReference type="PRINTS" id="PR01433">
    <property type="entry name" value="POLYCYSTIN2"/>
</dbReference>
<dbReference type="SUPFAM" id="SSF47473">
    <property type="entry name" value="EF-hand"/>
    <property type="match status" value="1"/>
</dbReference>
<dbReference type="SUPFAM" id="SSF81324">
    <property type="entry name" value="Voltage-gated potassium channels"/>
    <property type="match status" value="1"/>
</dbReference>
<dbReference type="PROSITE" id="PS50222">
    <property type="entry name" value="EF_HAND_2"/>
    <property type="match status" value="1"/>
</dbReference>
<protein>
    <recommendedName>
        <fullName evidence="53">Polycystin-2</fullName>
        <shortName evidence="51">PC2</shortName>
    </recommendedName>
    <alternativeName>
        <fullName>Autosomal dominant polycystic kidney disease type II protein</fullName>
    </alternativeName>
    <alternativeName>
        <fullName>Polycystic kidney disease 2 protein</fullName>
    </alternativeName>
    <alternativeName>
        <fullName evidence="52">Polycystwin</fullName>
    </alternativeName>
    <alternativeName>
        <fullName evidence="52">R48321</fullName>
    </alternativeName>
    <alternativeName>
        <fullName evidence="50 60">Transient receptor potential cation channel subfamily P member 2</fullName>
    </alternativeName>
</protein>
<feature type="chain" id="PRO_0000164356" description="Polycystin-2">
    <location>
        <begin position="1"/>
        <end position="968"/>
    </location>
</feature>
<feature type="topological domain" description="Cytoplasmic" evidence="35 36 37">
    <location>
        <begin position="1"/>
        <end position="219"/>
    </location>
</feature>
<feature type="transmembrane region" description="Helical; Name=S1" evidence="35 36 37">
    <location>
        <begin position="220"/>
        <end position="241"/>
    </location>
</feature>
<feature type="topological domain" description="Extracellular" evidence="35 36 37">
    <location>
        <begin position="242"/>
        <end position="468"/>
    </location>
</feature>
<feature type="transmembrane region" description="Helical; Name=S2" evidence="35 36 37">
    <location>
        <begin position="469"/>
        <end position="489"/>
    </location>
</feature>
<feature type="topological domain" description="Cytoplasmic" evidence="35 36 37">
    <location>
        <begin position="490"/>
        <end position="505"/>
    </location>
</feature>
<feature type="transmembrane region" description="Helical; Name=S3" evidence="35 36 37">
    <location>
        <begin position="506"/>
        <end position="526"/>
    </location>
</feature>
<feature type="topological domain" description="Extracellular" evidence="35 36 37">
    <location>
        <begin position="527"/>
        <end position="552"/>
    </location>
</feature>
<feature type="transmembrane region" description="Helical; Name=S4" evidence="35 36 37">
    <location>
        <begin position="553"/>
        <end position="573"/>
    </location>
</feature>
<feature type="topological domain" description="Cytoplasmic" evidence="35 36 37">
    <location>
        <begin position="574"/>
        <end position="597"/>
    </location>
</feature>
<feature type="transmembrane region" description="Helical; Name=5" evidence="35 36 37">
    <location>
        <begin position="598"/>
        <end position="619"/>
    </location>
</feature>
<feature type="topological domain" description="Extracellular" evidence="35 36 37">
    <location>
        <begin position="620"/>
        <end position="631"/>
    </location>
</feature>
<feature type="intramembrane region" description="Pore-forming" evidence="35 36 37">
    <location>
        <begin position="632"/>
        <end position="646"/>
    </location>
</feature>
<feature type="topological domain" description="Extracellular" evidence="35 36 37">
    <location>
        <begin position="647"/>
        <end position="654"/>
    </location>
</feature>
<feature type="transmembrane region" description="Helical; Name=S6" evidence="35 36 37">
    <location>
        <begin position="655"/>
        <end position="675"/>
    </location>
</feature>
<feature type="topological domain" description="Cytoplasmic" evidence="35 36 37">
    <location>
        <begin position="676"/>
        <end position="968"/>
    </location>
</feature>
<feature type="domain" description="EF-hand" evidence="2 20 30">
    <location>
        <begin position="750"/>
        <end position="785"/>
    </location>
</feature>
<feature type="region of interest" description="Disordered" evidence="3">
    <location>
        <begin position="1"/>
        <end position="28"/>
    </location>
</feature>
<feature type="region of interest" description="Disordered" evidence="3">
    <location>
        <begin position="58"/>
        <end position="181"/>
    </location>
</feature>
<feature type="region of interest" description="Disordered" evidence="3">
    <location>
        <begin position="764"/>
        <end position="831"/>
    </location>
</feature>
<feature type="region of interest" description="Linker" evidence="57">
    <location>
        <begin position="803"/>
        <end position="822"/>
    </location>
</feature>
<feature type="region of interest" description="Important for interaction with PACS1 and PACS2" evidence="17">
    <location>
        <begin position="810"/>
        <end position="821"/>
    </location>
</feature>
<feature type="region of interest" description="Disordered" evidence="3">
    <location>
        <begin position="917"/>
        <end position="968"/>
    </location>
</feature>
<feature type="coiled-coil region" evidence="25 57">
    <location>
        <begin position="833"/>
        <end position="872"/>
    </location>
</feature>
<feature type="short sequence motif" description="Selectivity filter" evidence="59">
    <location>
        <begin position="641"/>
        <end position="643"/>
    </location>
</feature>
<feature type="compositionally biased region" description="Polar residues" evidence="3">
    <location>
        <begin position="1"/>
        <end position="11"/>
    </location>
</feature>
<feature type="compositionally biased region" description="Low complexity" evidence="3">
    <location>
        <begin position="62"/>
        <end position="83"/>
    </location>
</feature>
<feature type="compositionally biased region" description="Acidic residues" evidence="3">
    <location>
        <begin position="95"/>
        <end position="107"/>
    </location>
</feature>
<feature type="compositionally biased region" description="Low complexity" evidence="3">
    <location>
        <begin position="123"/>
        <end position="139"/>
    </location>
</feature>
<feature type="compositionally biased region" description="Basic and acidic residues" evidence="3">
    <location>
        <begin position="770"/>
        <end position="795"/>
    </location>
</feature>
<feature type="compositionally biased region" description="Low complexity" evidence="3">
    <location>
        <begin position="796"/>
        <end position="807"/>
    </location>
</feature>
<feature type="compositionally biased region" description="Low complexity" evidence="3">
    <location>
        <begin position="938"/>
        <end position="951"/>
    </location>
</feature>
<feature type="binding site" evidence="41 72">
    <location>
        <position position="557"/>
    </location>
    <ligand>
        <name>cholesterol</name>
        <dbReference type="ChEBI" id="CHEBI:16113"/>
    </ligand>
</feature>
<feature type="binding site" evidence="41 46 72 74">
    <location>
        <position position="641"/>
    </location>
    <ligand>
        <name>Ca(2+)</name>
        <dbReference type="ChEBI" id="CHEBI:29108"/>
        <label>1</label>
        <note>ligand shared between homotetrameric partners</note>
    </ligand>
</feature>
<feature type="binding site" evidence="30 62">
    <location>
        <position position="763"/>
    </location>
    <ligand>
        <name>Ca(2+)</name>
        <dbReference type="ChEBI" id="CHEBI:29108"/>
        <label>2</label>
    </ligand>
</feature>
<feature type="binding site" evidence="30 62">
    <location>
        <position position="765"/>
    </location>
    <ligand>
        <name>Ca(2+)</name>
        <dbReference type="ChEBI" id="CHEBI:29108"/>
        <label>2</label>
    </ligand>
</feature>
<feature type="binding site" evidence="30 62">
    <location>
        <position position="767"/>
    </location>
    <ligand>
        <name>Ca(2+)</name>
        <dbReference type="ChEBI" id="CHEBI:29108"/>
        <label>2</label>
    </ligand>
</feature>
<feature type="binding site" evidence="30 62">
    <location>
        <position position="769"/>
    </location>
    <ligand>
        <name>Ca(2+)</name>
        <dbReference type="ChEBI" id="CHEBI:29108"/>
        <label>2</label>
    </ligand>
</feature>
<feature type="binding site" evidence="30 62">
    <location>
        <position position="774"/>
    </location>
    <ligand>
        <name>Ca(2+)</name>
        <dbReference type="ChEBI" id="CHEBI:29108"/>
        <label>2</label>
    </ligand>
</feature>
<feature type="modified residue" description="Phosphoserine" evidence="19">
    <location>
        <position position="76"/>
    </location>
</feature>
<feature type="modified residue" description="Phosphoserine" evidence="56">
    <location>
        <position position="80"/>
    </location>
</feature>
<feature type="modified residue" description="Omega-N-methylarginine" evidence="1">
    <location>
        <position position="137"/>
    </location>
</feature>
<feature type="modified residue" description="Phosphoserine" evidence="27 56">
    <location>
        <position position="801"/>
    </location>
</feature>
<feature type="modified residue" description="Phosphoserine" evidence="1">
    <location>
        <position position="808"/>
    </location>
</feature>
<feature type="modified residue" description="Phosphoserine" evidence="14 55 56 75 76">
    <location>
        <position position="812"/>
    </location>
</feature>
<feature type="modified residue" description="Phosphoserine" evidence="58">
    <location>
        <position position="829"/>
    </location>
</feature>
<feature type="glycosylation site" description="N-linked (GlcNAc...) asparagine" evidence="37">
    <location>
        <position position="299"/>
    </location>
</feature>
<feature type="glycosylation site" description="N-linked (GlcNAc...) asparagine" evidence="37">
    <location>
        <position position="305"/>
    </location>
</feature>
<feature type="glycosylation site" description="N-linked (GlcNAc...) (complex) asparagine" evidence="23 35 36 37 42 46 73 74">
    <location>
        <position position="328"/>
    </location>
</feature>
<feature type="glycosylation site" description="N-linked (GlcNAc...) asparagine" evidence="35 36 37 42 46 73">
    <location>
        <position position="362"/>
    </location>
</feature>
<feature type="glycosylation site" description="N-linked (GlcNAc...) asparagine" evidence="35 36 37 42 46 73 74">
    <location>
        <position position="375"/>
    </location>
</feature>
<feature type="disulfide bond" evidence="35 37 46 67 68 74">
    <location>
        <begin position="331"/>
        <end position="344"/>
    </location>
</feature>
<feature type="splice variant" id="VSP_042479" description="In isoform 2." evidence="53">
    <original>CEIIFCFF</original>
    <variation>FICSSYGD</variation>
    <location>
        <begin position="476"/>
        <end position="483"/>
    </location>
</feature>
<feature type="splice variant" id="VSP_042480" description="In isoform 2." evidence="53">
    <location>
        <begin position="484"/>
        <end position="968"/>
    </location>
</feature>
<feature type="splice variant" id="VSP_042481" description="In isoform 3." evidence="53">
    <location>
        <begin position="517"/>
        <end position="572"/>
    </location>
</feature>
<feature type="splice variant" id="VSP_042482" description="In isoform 4." evidence="53">
    <original>IFTQFRIILGDINF</original>
    <variation>IICSWRSSMIRTLK</variation>
    <location>
        <begin position="633"/>
        <end position="646"/>
    </location>
</feature>
<feature type="splice variant" id="VSP_042483" description="In isoform 4." evidence="53">
    <location>
        <begin position="647"/>
        <end position="968"/>
    </location>
</feature>
<feature type="splice variant" id="VSP_042484" description="In isoform 5." evidence="53">
    <location>
        <begin position="748"/>
        <end position="841"/>
    </location>
</feature>
<feature type="sequence variant" id="VAR_058820" description="In dbSNP:rs1004860210." evidence="11">
    <original>P</original>
    <variation>L</variation>
    <location>
        <position position="24"/>
    </location>
</feature>
<feature type="sequence variant" id="VAR_011072" description="In dbSNP:rs1805044." evidence="4 11 15 16 22">
    <original>R</original>
    <variation>P</variation>
    <location>
        <position position="28"/>
    </location>
</feature>
<feature type="sequence variant" id="VAR_058821" description="In dbSNP:rs117078377." evidence="22">
    <original>A</original>
    <variation>T</variation>
    <location>
        <position position="190"/>
    </location>
</feature>
<feature type="sequence variant" id="VAR_058822" description="In PKD2; dbSNP:rs990932947." evidence="15">
    <original>R</original>
    <variation>Q</variation>
    <location>
        <position position="306"/>
    </location>
</feature>
<feature type="sequence variant" id="VAR_058823" description="In PKD2; dbSNP:rs145877597." evidence="18">
    <original>R</original>
    <variation>Q</variation>
    <location>
        <position position="322"/>
    </location>
</feature>
<feature type="sequence variant" id="VAR_058824" description="In PKD2; dbSNP:rs1553925453." evidence="11">
    <original>R</original>
    <variation>W</variation>
    <location>
        <position position="322"/>
    </location>
</feature>
<feature type="sequence variant" id="VAR_011073" description="In PKD2." evidence="4 13">
    <original>A</original>
    <variation>P</variation>
    <location>
        <position position="356"/>
    </location>
</feature>
<feature type="sequence variant" id="VAR_064394" description="In PKD2." evidence="28">
    <original>A</original>
    <variation>P</variation>
    <location>
        <position position="384"/>
    </location>
</feature>
<feature type="sequence variant" id="VAR_009195" description="In PKD2; affects channel activity as it is able to abolish channel currents induced by the gain-of-function artificial mutant P-604." evidence="13 32 49">
    <original>W</original>
    <variation>G</variation>
    <location>
        <position position="414"/>
    </location>
</feature>
<feature type="sequence variant" id="VAR_058825" description="In PKD2; affects channel activity as it is able to abolish channel currents induced by the gain-of-function artificial mutant P-604; dbSNP:rs1727651995." evidence="15 32">
    <original>R</original>
    <variation>G</variation>
    <location>
        <position position="420"/>
    </location>
</feature>
<feature type="sequence variant" id="VAR_014919" description="In dbSNP:rs1801612.">
    <original>I</original>
    <variation>V</variation>
    <location>
        <position position="452"/>
    </location>
</feature>
<feature type="sequence variant" id="VAR_011074" description="In PKD2; somatic mutation." evidence="8">
    <location>
        <position position="479"/>
    </location>
</feature>
<feature type="sequence variant" id="VAR_058826" description="In dbSNP:rs75762896." evidence="22">
    <original>F</original>
    <variation>C</variation>
    <location>
        <position position="482"/>
    </location>
</feature>
<feature type="sequence variant" id="VAR_011075" description="In PKD2; somatic mutation." evidence="8">
    <location>
        <begin position="504"/>
        <end position="512"/>
    </location>
</feature>
<feature type="sequence variant" id="VAR_058827" description="In PKD2; loss of function in the release of Ca(2+) stores from the endoplasmic reticulum; no effect on location at the endoplasmic reticulum; affects channel activity as it is able to abolish channel currents induced by the gain-of-function artificial mutant P-604; dbSNP:rs121918043." evidence="5 10 32 33 38">
    <original>D</original>
    <variation>V</variation>
    <location>
        <position position="511"/>
    </location>
</feature>
<feature type="sequence variant" id="VAR_058828" description="In PKD2; Abolishes increased channel activity due to a gain of function mutation; when associated with P-604. Abolishes increased channel activity due to a gain of function mutation; when associated with A-677 and A-681." evidence="13 47">
    <original>C</original>
    <variation>R</variation>
    <location>
        <position position="632"/>
    </location>
</feature>
<feature type="sequence variant" id="VAR_011076" description="In PKD2; somatic mutation; abolishes channel currents induced by the gain-of-function artificial mutant P-604; dbSNP:rs1578144872." evidence="8">
    <location>
        <position position="684"/>
    </location>
</feature>
<feature type="sequence variant" id="VAR_058829" description="In dbSNP:rs2234917." evidence="11">
    <original>M</original>
    <variation>L</variation>
    <location>
        <position position="800"/>
    </location>
</feature>
<feature type="sequence variant" id="VAR_058830" description="In PKD2; dbSNP:rs147654263." evidence="13">
    <original>R</original>
    <variation>Q</variation>
    <location>
        <position position="807"/>
    </location>
</feature>
<feature type="mutagenesis site" description="Abolishes phosphorylation of the N-terminal domain. Abolishes the ability to complement a pkd2-deficient zebrafish mutant; when associated with A-80." evidence="19">
    <original>S</original>
    <variation>A</variation>
    <location>
        <position position="76"/>
    </location>
</feature>
<feature type="mutagenesis site" description="Decreases phosphorylation of the N-terminal domain. Abolishes the ability to complement a pkd2-deficient zebrafish mutant; when associated with A-76." evidence="19">
    <original>S</original>
    <variation>A</variation>
    <location>
        <position position="80"/>
    </location>
</feature>
<feature type="mutagenesis site" description="Abolishes increased channel activity due to a gain of function mutation; when associated with P-604." evidence="38">
    <original>W</original>
    <variation>A</variation>
    <location>
        <position position="201"/>
    </location>
</feature>
<feature type="mutagenesis site" description="Does not affect localization to the cilium. Loss of ion channel function." evidence="42">
    <original>C</original>
    <variation>S</variation>
    <location>
        <position position="331"/>
    </location>
</feature>
<feature type="mutagenesis site" description="No effect on channel activation." evidence="32">
    <original>F</original>
    <variation>A</variation>
    <variation>I</variation>
    <location>
        <position position="604"/>
    </location>
</feature>
<feature type="mutagenesis site" description="Gain-of-function mutation resulting in increased channel activity. Absence of gain of function; when associated with F-605 DEL; when associated with A-201; when associated with V-511; when associated with G-414; when associated with G-420; when associated with Y-684 DEL; when associated with A-684; when associated with R-632; when asoociated with R-632; when associated S-629. Increased channel activity; when associated with 736-L-N-737 DEL. Coexpression of PKD1 with PKD2- F604P dramatically reduces the current in comparison with that measured when PKD2-P-604 is expressed by itself." evidence="32 38 44 47">
    <original>F</original>
    <variation>P</variation>
    <location>
        <position position="604"/>
    </location>
</feature>
<feature type="mutagenesis site" description="Abolishes increased channel activity due to a gain of function mutation; when associated with P-604." evidence="32">
    <location>
        <position position="605"/>
    </location>
</feature>
<feature type="mutagenesis site" description="Abolishes increased channel activity due to a gain of function mutation; when associated with P-604. Reduces but do not abolish ion channel function; when associated with A-677 and A-681." evidence="47">
    <original>F</original>
    <variation>S</variation>
    <location>
        <position position="629"/>
    </location>
</feature>
<feature type="mutagenesis site" description="Abolishes increased channel activity due to a gain of function mutation; when associated with P-604. Reduces but do not abolish ion channel function; when associated with A-677 and A-681. Abolishes the Ca(2+) permeability and alters its monovalent cation selectivity; when associated with A-677 and A-681." evidence="47">
    <original>R</original>
    <variation>C</variation>
    <location>
        <position position="638"/>
    </location>
</feature>
<feature type="mutagenesis site" description="Constitutive active channel; when associated with A-681. Reduces but do not abolish ion channel function; when associated with S-629 and A-681. Reduces but do not abolish ion channel function; when associated with C-638 and A-681." evidence="40 47">
    <original>L</original>
    <variation>A</variation>
    <location>
        <position position="677"/>
    </location>
</feature>
<feature type="mutagenesis site" description="Gain of function mutation." evidence="38">
    <original>L</original>
    <variation>N</variation>
    <location>
        <position position="677"/>
    </location>
</feature>
<feature type="mutagenesis site" description="Constitutive active channel; when associated with A-677. Reduces but do not abolish ion channel function; when associated with S-629 and A-677. Reduces but do not abolish ion channel function; when associated with C-638 and A-677." evidence="40 47">
    <original>N</original>
    <variation>A</variation>
    <location>
        <position position="681"/>
    </location>
</feature>
<feature type="mutagenesis site" description="Abolishes increased channel activity due to a gain of function mutation; when associated with P-604." evidence="38">
    <original>Y</original>
    <variation>A</variation>
    <location>
        <position position="684"/>
    </location>
</feature>
<feature type="mutagenesis site" description="Abolishes increased channel activity due to a gain of function mutation; when associated with P-604." evidence="38">
    <original>K</original>
    <variation>A</variation>
    <location>
        <position position="688"/>
    </location>
</feature>
<feature type="mutagenesis site" description="Decreases phosphorylation; when associated with A-801; A-812; A-831 and A-943." evidence="19">
    <original>T</original>
    <variation>A</variation>
    <location>
        <position position="721"/>
    </location>
</feature>
<feature type="mutagenesis site" description="Increased channel activity; when associated with P-604." evidence="32">
    <location>
        <begin position="736"/>
        <end position="737"/>
    </location>
</feature>
<feature type="mutagenesis site" description="Strongly increases calcium binding affinity." evidence="30">
    <original>Q</original>
    <variation>G</variation>
    <location>
        <position position="768"/>
    </location>
</feature>
<feature type="mutagenesis site" description="Loss of calcium-binding site; when associated with A-774." evidence="20">
    <original>T</original>
    <variation>A</variation>
    <location>
        <position position="771"/>
    </location>
</feature>
<feature type="mutagenesis site" description="Loss of calcium-binding site; when associated with A-771." evidence="20">
    <original>E</original>
    <variation>A</variation>
    <location>
        <position position="774"/>
    </location>
</feature>
<feature type="mutagenesis site" description="Abolishes calcium binding via the EF-hand." evidence="30">
    <original>E</original>
    <variation>Q</variation>
    <location>
        <position position="774"/>
    </location>
</feature>
<feature type="mutagenesis site" description="Decreases phosphorylation; when associated with A-721; A-812; A-831 and A-943." evidence="19">
    <original>S</original>
    <variation>A</variation>
    <location>
        <position position="801"/>
    </location>
</feature>
<feature type="mutagenesis site" description="Phosphomimetic mutant. No effect on release of Ca(2+) stores from the endoplasmic reticulum." evidence="27">
    <original>S</original>
    <variation>D</variation>
    <location>
        <position position="801"/>
    </location>
</feature>
<feature type="mutagenesis site" description="Loss of phosphorylation at this site. Impairs release of Ca(2+) stores from the endoplasmic reticulum." evidence="27">
    <original>S</original>
    <variation>G</variation>
    <location>
        <position position="801"/>
    </location>
</feature>
<feature type="mutagenesis site" description="Loss of phosphorylation at Ser-801." evidence="27">
    <original>S</original>
    <variation>N</variation>
    <location>
        <position position="804"/>
    </location>
</feature>
<feature type="mutagenesis site" description="Decreases interaction with PACS1 and enhances expression at the cell membrane. Decreases phosphorylation; when associated with A-721; A-801; A-831 and A-943." evidence="17 19">
    <original>S</original>
    <variation>A</variation>
    <location>
        <position position="812"/>
    </location>
</feature>
<feature type="mutagenesis site" description="No effect on interaction with PACS1." evidence="17">
    <original>S</original>
    <variation>D</variation>
    <location>
        <position position="812"/>
    </location>
</feature>
<feature type="mutagenesis site" description="Strongly decreases interaction with PACS1 and enhances expression at the cell membrane." evidence="17">
    <original>DDD</original>
    <variation>AAA</variation>
    <location>
        <begin position="815"/>
        <end position="817"/>
    </location>
</feature>
<feature type="mutagenesis site" description="Abolishes increased channel opening in response to cAMP and phosphorylation by PKA." evidence="31">
    <original>S</original>
    <variation>A</variation>
    <location>
        <position position="829"/>
    </location>
</feature>
<feature type="mutagenesis site" description="Decreases phosphorylation; when associated with A-721; A-801; A-812 and A-943." evidence="19">
    <original>S</original>
    <variation>A</variation>
    <location>
        <position position="831"/>
    </location>
</feature>
<feature type="mutagenesis site" description="Abolishes oligomerization and interaction with PKD1; when associated with A-846; A-849; A-860; A-863 and A-867." evidence="25">
    <original>L</original>
    <variation>A</variation>
    <location>
        <position position="842"/>
    </location>
</feature>
<feature type="mutagenesis site" description="Loss of protein solubility." evidence="20">
    <original>L</original>
    <variation>P</variation>
    <location>
        <position position="842"/>
    </location>
</feature>
<feature type="mutagenesis site" description="Abolishes oligomerization and interaction with PKD1; when associated with A-842; A-849; A-860; A-863 and A-867." evidence="25">
    <original>V</original>
    <variation>A</variation>
    <location>
        <position position="846"/>
    </location>
</feature>
<feature type="mutagenesis site" description="Loss of protein solubility." evidence="20">
    <original>V</original>
    <variation>E</variation>
    <location>
        <position position="846"/>
    </location>
</feature>
<feature type="mutagenesis site" description="Abolishes oligomerization and interaction with PKD1; when associated with A-842; A-846; A-860; A-863 and A-867." evidence="25">
    <original>M</original>
    <variation>A</variation>
    <location>
        <position position="849"/>
    </location>
</feature>
<feature type="mutagenesis site" description="Loss of protein solubility." evidence="20">
    <original>M</original>
    <variation>K</variation>
    <location>
        <position position="849"/>
    </location>
</feature>
<feature type="mutagenesis site" description="Loss of protein solubility." evidence="20">
    <original>I</original>
    <variation>P</variation>
    <location>
        <position position="853"/>
    </location>
</feature>
<feature type="mutagenesis site" description="Loss of protein solubility." evidence="20">
    <original>I</original>
    <variation>K</variation>
    <location>
        <position position="856"/>
    </location>
</feature>
<feature type="mutagenesis site" description="Abolishes oligomerization and interaction with PKD1; when associated with A-842; A-846; A-849; A-863 and A-867." evidence="25">
    <original>I</original>
    <variation>A</variation>
    <location>
        <position position="860"/>
    </location>
</feature>
<feature type="mutagenesis site" description="Abolishes oligomerization and interaction with PKD1; when associated with A-842; A-846; A-849; A-860 and A-867." evidence="25">
    <original>V</original>
    <variation>A</variation>
    <location>
        <position position="863"/>
    </location>
</feature>
<feature type="mutagenesis site" description="Loss of protein solubility; when associated with K-849." evidence="20">
    <original>V</original>
    <variation>E</variation>
    <location>
        <position position="863"/>
    </location>
</feature>
<feature type="mutagenesis site" description="Abolishes oligomerization and interaction with PKD1; when associated with A-842; A-846; A-849; A-860 and A-863." evidence="25">
    <original>L</original>
    <variation>A</variation>
    <location>
        <position position="867"/>
    </location>
</feature>
<feature type="mutagenesis site" description="Decreases phosphorylation; when associated with A-721; A-801; A-812 and A-831." evidence="19">
    <original>S</original>
    <variation>A</variation>
    <location>
        <position position="943"/>
    </location>
</feature>
<feature type="sequence conflict" description="In Ref. 2; AAC16004." evidence="53" ref="2">
    <original>G</original>
    <variation>R</variation>
    <location>
        <position position="45"/>
    </location>
</feature>
<feature type="sequence conflict" description="In Ref. 4; AAC50933." evidence="53" ref="4">
    <original>G</original>
    <variation>V</variation>
    <location>
        <position position="449"/>
    </location>
</feature>
<feature type="helix" evidence="82">
    <location>
        <begin position="214"/>
        <end position="241"/>
    </location>
</feature>
<feature type="helix" evidence="82">
    <location>
        <begin position="247"/>
        <end position="257"/>
    </location>
</feature>
<feature type="strand" evidence="84">
    <location>
        <begin position="262"/>
        <end position="265"/>
    </location>
</feature>
<feature type="helix" evidence="83">
    <location>
        <begin position="270"/>
        <end position="272"/>
    </location>
</feature>
<feature type="helix" evidence="82">
    <location>
        <begin position="276"/>
        <end position="284"/>
    </location>
</feature>
<feature type="helix" evidence="82">
    <location>
        <begin position="286"/>
        <end position="291"/>
    </location>
</feature>
<feature type="strand" evidence="81">
    <location>
        <begin position="304"/>
        <end position="306"/>
    </location>
</feature>
<feature type="turn" evidence="82">
    <location>
        <begin position="310"/>
        <end position="312"/>
    </location>
</feature>
<feature type="strand" evidence="82">
    <location>
        <begin position="313"/>
        <end position="315"/>
    </location>
</feature>
<feature type="strand" evidence="82">
    <location>
        <begin position="320"/>
        <end position="326"/>
    </location>
</feature>
<feature type="helix" evidence="81">
    <location>
        <begin position="328"/>
        <end position="330"/>
    </location>
</feature>
<feature type="helix" evidence="82">
    <location>
        <begin position="335"/>
        <end position="337"/>
    </location>
</feature>
<feature type="turn" evidence="82">
    <location>
        <begin position="338"/>
        <end position="340"/>
    </location>
</feature>
<feature type="turn" evidence="81">
    <location>
        <begin position="350"/>
        <end position="352"/>
    </location>
</feature>
<feature type="strand" evidence="82">
    <location>
        <begin position="363"/>
        <end position="367"/>
    </location>
</feature>
<feature type="turn" evidence="82">
    <location>
        <begin position="371"/>
        <end position="375"/>
    </location>
</feature>
<feature type="strand" evidence="84">
    <location>
        <begin position="382"/>
        <end position="386"/>
    </location>
</feature>
<feature type="strand" evidence="82">
    <location>
        <begin position="390"/>
        <end position="394"/>
    </location>
</feature>
<feature type="helix" evidence="82">
    <location>
        <begin position="399"/>
        <end position="411"/>
    </location>
</feature>
<feature type="strand" evidence="82">
    <location>
        <begin position="419"/>
        <end position="430"/>
    </location>
</feature>
<feature type="turn" evidence="82">
    <location>
        <begin position="431"/>
        <end position="434"/>
    </location>
</feature>
<feature type="strand" evidence="82">
    <location>
        <begin position="435"/>
        <end position="444"/>
    </location>
</feature>
<feature type="strand" evidence="84">
    <location>
        <begin position="447"/>
        <end position="450"/>
    </location>
</feature>
<feature type="strand" evidence="82">
    <location>
        <begin position="452"/>
        <end position="460"/>
    </location>
</feature>
<feature type="helix" evidence="82">
    <location>
        <begin position="468"/>
        <end position="495"/>
    </location>
</feature>
<feature type="strand" evidence="84">
    <location>
        <begin position="496"/>
        <end position="498"/>
    </location>
</feature>
<feature type="turn" evidence="82">
    <location>
        <begin position="500"/>
        <end position="503"/>
    </location>
</feature>
<feature type="strand" evidence="82">
    <location>
        <begin position="504"/>
        <end position="506"/>
    </location>
</feature>
<feature type="helix" evidence="82">
    <location>
        <begin position="507"/>
        <end position="527"/>
    </location>
</feature>
<feature type="turn" evidence="82">
    <location>
        <begin position="528"/>
        <end position="530"/>
    </location>
</feature>
<feature type="helix" evidence="82">
    <location>
        <begin position="533"/>
        <end position="538"/>
    </location>
</feature>
<feature type="helix" evidence="82">
    <location>
        <begin position="549"/>
        <end position="572"/>
    </location>
</feature>
<feature type="helix" evidence="82">
    <location>
        <begin position="573"/>
        <end position="575"/>
    </location>
</feature>
<feature type="turn" evidence="84">
    <location>
        <begin position="578"/>
        <end position="580"/>
    </location>
</feature>
<feature type="helix" evidence="82">
    <location>
        <begin position="581"/>
        <end position="619"/>
    </location>
</feature>
<feature type="turn" evidence="82">
    <location>
        <begin position="620"/>
        <end position="622"/>
    </location>
</feature>
<feature type="helix" evidence="82">
    <location>
        <begin position="624"/>
        <end position="626"/>
    </location>
</feature>
<feature type="helix" evidence="82">
    <location>
        <begin position="629"/>
        <end position="641"/>
    </location>
</feature>
<feature type="helix" evidence="82">
    <location>
        <begin position="646"/>
        <end position="652"/>
    </location>
</feature>
<feature type="helix" evidence="82">
    <location>
        <begin position="656"/>
        <end position="667"/>
    </location>
</feature>
<feature type="helix" evidence="82">
    <location>
        <begin position="668"/>
        <end position="672"/>
    </location>
</feature>
<feature type="helix" evidence="82">
    <location>
        <begin position="673"/>
        <end position="697"/>
    </location>
</feature>
<feature type="turn" evidence="77">
    <location>
        <begin position="730"/>
        <end position="734"/>
    </location>
</feature>
<feature type="helix" evidence="77">
    <location>
        <begin position="738"/>
        <end position="744"/>
    </location>
</feature>
<feature type="turn" evidence="77">
    <location>
        <begin position="745"/>
        <end position="747"/>
    </location>
</feature>
<feature type="helix" evidence="77">
    <location>
        <begin position="752"/>
        <end position="762"/>
    </location>
</feature>
<feature type="strand" evidence="77">
    <location>
        <begin position="763"/>
        <end position="766"/>
    </location>
</feature>
<feature type="strand" evidence="79">
    <location>
        <begin position="767"/>
        <end position="771"/>
    </location>
</feature>
<feature type="helix" evidence="77">
    <location>
        <begin position="773"/>
        <end position="777"/>
    </location>
</feature>
<feature type="turn" evidence="77">
    <location>
        <begin position="781"/>
        <end position="783"/>
    </location>
</feature>
<feature type="strand" evidence="78">
    <location>
        <begin position="793"/>
        <end position="795"/>
    </location>
</feature>
<feature type="helix" evidence="80">
    <location>
        <begin position="836"/>
        <end position="894"/>
    </location>
</feature>
<accession>Q13563</accession>
<accession>O60441</accession>
<accession>Q15764</accession>
<accession>Q2M1Q3</accession>
<accession>Q2M1Q5</accession>